<feature type="chain" id="PRO_0000153956" description="TATA-box-binding protein">
    <location>
        <begin position="1"/>
        <end position="339"/>
    </location>
</feature>
<feature type="repeat" description="1">
    <location>
        <begin position="165"/>
        <end position="241"/>
    </location>
</feature>
<feature type="repeat" description="2">
    <location>
        <begin position="255"/>
        <end position="332"/>
    </location>
</feature>
<feature type="region of interest" description="Disordered" evidence="2">
    <location>
        <begin position="1"/>
        <end position="21"/>
    </location>
</feature>
<feature type="region of interest" description="Disordered" evidence="2">
    <location>
        <begin position="36"/>
        <end position="71"/>
    </location>
</feature>
<feature type="region of interest" description="Disordered" evidence="2">
    <location>
        <begin position="127"/>
        <end position="159"/>
    </location>
</feature>
<feature type="compositionally biased region" description="Polar residues" evidence="2">
    <location>
        <begin position="38"/>
        <end position="50"/>
    </location>
</feature>
<feature type="compositionally biased region" description="Low complexity" evidence="2">
    <location>
        <begin position="57"/>
        <end position="71"/>
    </location>
</feature>
<feature type="compositionally biased region" description="Low complexity" evidence="2">
    <location>
        <begin position="127"/>
        <end position="138"/>
    </location>
</feature>
<feature type="compositionally biased region" description="Low complexity" evidence="2">
    <location>
        <begin position="146"/>
        <end position="156"/>
    </location>
</feature>
<feature type="binding site" evidence="22 38">
    <location>
        <position position="167"/>
    </location>
    <ligand>
        <name>DNA</name>
        <dbReference type="ChEBI" id="CHEBI:16991"/>
    </ligand>
</feature>
<feature type="binding site" evidence="22 38">
    <location>
        <position position="203"/>
    </location>
    <ligand>
        <name>DNA</name>
        <dbReference type="ChEBI" id="CHEBI:16991"/>
    </ligand>
</feature>
<feature type="binding site" evidence="22 38">
    <location>
        <position position="218"/>
    </location>
    <ligand>
        <name>DNA</name>
        <dbReference type="ChEBI" id="CHEBI:16991"/>
    </ligand>
</feature>
<feature type="binding site" evidence="22 38">
    <location>
        <position position="257"/>
    </location>
    <ligand>
        <name>DNA</name>
        <dbReference type="ChEBI" id="CHEBI:16991"/>
    </ligand>
</feature>
<feature type="binding site" evidence="22 38">
    <location>
        <position position="294"/>
    </location>
    <ligand>
        <name>DNA</name>
        <dbReference type="ChEBI" id="CHEBI:16991"/>
    </ligand>
</feature>
<feature type="splice variant" id="VSP_045488" description="In isoform 2." evidence="34">
    <location>
        <begin position="1"/>
        <end position="20"/>
    </location>
</feature>
<feature type="sequence variant" id="VAR_016987" evidence="19">
    <location>
        <begin position="92"/>
        <end position="95"/>
    </location>
</feature>
<feature type="sequence conflict" description="In Ref. 4; BAG65425." evidence="37" ref="4">
    <location>
        <position position="95"/>
    </location>
</feature>
<feature type="sequence conflict" description="In Ref. 4; BAG65425." evidence="37" ref="4">
    <original>I</original>
    <variation>T</variation>
    <location>
        <position position="149"/>
    </location>
</feature>
<feature type="sequence conflict" description="In Ref. 3; AAC03409." evidence="37" ref="3">
    <original>A</original>
    <variation>R</variation>
    <location>
        <position position="187"/>
    </location>
</feature>
<feature type="strand" evidence="49">
    <location>
        <begin position="164"/>
        <end position="173"/>
    </location>
</feature>
<feature type="helix" evidence="49">
    <location>
        <begin position="180"/>
        <end position="186"/>
    </location>
</feature>
<feature type="strand" evidence="51">
    <location>
        <begin position="187"/>
        <end position="189"/>
    </location>
</feature>
<feature type="strand" evidence="49">
    <location>
        <begin position="190"/>
        <end position="192"/>
    </location>
</feature>
<feature type="turn" evidence="49">
    <location>
        <begin position="194"/>
        <end position="196"/>
    </location>
</feature>
<feature type="strand" evidence="49">
    <location>
        <begin position="198"/>
        <end position="204"/>
    </location>
</feature>
<feature type="turn" evidence="49">
    <location>
        <begin position="205"/>
        <end position="208"/>
    </location>
</feature>
<feature type="strand" evidence="49">
    <location>
        <begin position="209"/>
        <end position="213"/>
    </location>
</feature>
<feature type="strand" evidence="49">
    <location>
        <begin position="217"/>
        <end position="222"/>
    </location>
</feature>
<feature type="helix" evidence="49">
    <location>
        <begin position="227"/>
        <end position="244"/>
    </location>
</feature>
<feature type="strand" evidence="49">
    <location>
        <begin position="251"/>
        <end position="263"/>
    </location>
</feature>
<feature type="helix" evidence="49">
    <location>
        <begin position="270"/>
        <end position="276"/>
    </location>
</feature>
<feature type="turn" evidence="49">
    <location>
        <begin position="277"/>
        <end position="280"/>
    </location>
</feature>
<feature type="strand" evidence="50">
    <location>
        <begin position="281"/>
        <end position="283"/>
    </location>
</feature>
<feature type="turn" evidence="49">
    <location>
        <begin position="285"/>
        <end position="287"/>
    </location>
</feature>
<feature type="strand" evidence="49">
    <location>
        <begin position="289"/>
        <end position="295"/>
    </location>
</feature>
<feature type="turn" evidence="49">
    <location>
        <begin position="296"/>
        <end position="299"/>
    </location>
</feature>
<feature type="strand" evidence="49">
    <location>
        <begin position="300"/>
        <end position="304"/>
    </location>
</feature>
<feature type="strand" evidence="49">
    <location>
        <begin position="308"/>
        <end position="313"/>
    </location>
</feature>
<feature type="helix" evidence="49">
    <location>
        <begin position="318"/>
        <end position="333"/>
    </location>
</feature>
<name>TBP_HUMAN</name>
<proteinExistence type="evidence at protein level"/>
<gene>
    <name type="primary">TBP</name>
    <name type="synonym">GTF2D1</name>
    <name type="synonym">TF2D</name>
    <name evidence="36" type="synonym">TFIID</name>
</gene>
<keyword id="KW-0002">3D-structure</keyword>
<keyword id="KW-0025">Alternative splicing</keyword>
<keyword id="KW-0225">Disease variant</keyword>
<keyword id="KW-0238">DNA-binding</keyword>
<keyword id="KW-0945">Host-virus interaction</keyword>
<keyword id="KW-0523">Neurodegeneration</keyword>
<keyword id="KW-0539">Nucleus</keyword>
<keyword id="KW-1267">Proteomics identification</keyword>
<keyword id="KW-1185">Reference proteome</keyword>
<keyword id="KW-0677">Repeat</keyword>
<keyword id="KW-0950">Spinocerebellar ataxia</keyword>
<keyword id="KW-0804">Transcription</keyword>
<keyword id="KW-0805">Transcription regulation</keyword>
<keyword id="KW-0818">Triplet repeat expansion</keyword>
<sequence>MDQNNSLPPYAQGLASPQGAMTPGIPIFSPMMPYGTGLTPQPIQNTNSLSILEEQQRQQQQQQQQQQQQQQQQQQQQQQQQQQQQQQQQQQQQQQAVAAAAVQQSTSQQATQGTSGQAPQLFHSQTLTTAPLPGTTPLYPSPMTPMTPITPATPASESSGIVPQLQNIVSTVNLGCKLDLKTIALRARNAEYNPKRFAAVIMRIREPRTTALIFSSGKMVCTGAKSEEQSRLAARKYARVVQKLGFPAKFLDFKIQNMVGSCDVKFPIRLEGLVLTHQQFSSYEPELFPGLIYRMIKPRIVLLIFVSGKVVLTGAKVRAEIYEAFENIYPILKGFRKTT</sequence>
<reference key="1">
    <citation type="journal article" date="1990" name="Nature">
        <title>Highly conserved core domain and unique N-terminus with presumptive regulatory motifs in a human TATA factor (TFIID).</title>
        <authorList>
            <person name="Hoffmann A."/>
            <person name="Sinn E."/>
            <person name="Yamamoto T."/>
            <person name="Wang J."/>
            <person name="Roy A."/>
            <person name="Horikoshi M."/>
            <person name="Roeder R.G."/>
        </authorList>
    </citation>
    <scope>NUCLEOTIDE SEQUENCE [MRNA] (ISOFORM 1)</scope>
    <scope>FUNCTION</scope>
    <scope>SUBUNIT</scope>
    <scope>VARIANT 92-GLN--GLN-95 DEL</scope>
</reference>
<reference key="2">
    <citation type="journal article" date="1990" name="Science">
        <title>Functional domains and upstream activation properties of cloned human TATA binding protein.</title>
        <authorList>
            <person name="Peterson M.G."/>
            <person name="Tanese N."/>
            <person name="Pugh B.F."/>
            <person name="Tjian R."/>
        </authorList>
    </citation>
    <scope>NUCLEOTIDE SEQUENCE [MRNA] (ISOFORM 1)</scope>
    <scope>FUNCTION</scope>
    <scope>SUBUNIT</scope>
    <scope>DOMAINS</scope>
</reference>
<reference key="3">
    <citation type="journal article" date="1990" name="Science">
        <title>Cloning of a transcriptionally active human TATA binding factor.</title>
        <authorList>
            <person name="Kao C.C."/>
            <person name="Lieberman P.M."/>
            <person name="Schmidt M.C."/>
            <person name="Zhou Q."/>
            <person name="Pei R."/>
            <person name="Berk A.J."/>
        </authorList>
    </citation>
    <scope>NUCLEOTIDE SEQUENCE [MRNA] (ISOFORM 1)</scope>
    <scope>FUNCTION</scope>
    <scope>SUBUNIT</scope>
    <source>
        <tissue>Fibroblast</tissue>
    </source>
</reference>
<reference key="4">
    <citation type="journal article" date="2004" name="Nat. Genet.">
        <title>Complete sequencing and characterization of 21,243 full-length human cDNAs.</title>
        <authorList>
            <person name="Ota T."/>
            <person name="Suzuki Y."/>
            <person name="Nishikawa T."/>
            <person name="Otsuki T."/>
            <person name="Sugiyama T."/>
            <person name="Irie R."/>
            <person name="Wakamatsu A."/>
            <person name="Hayashi K."/>
            <person name="Sato H."/>
            <person name="Nagai K."/>
            <person name="Kimura K."/>
            <person name="Makita H."/>
            <person name="Sekine M."/>
            <person name="Obayashi M."/>
            <person name="Nishi T."/>
            <person name="Shibahara T."/>
            <person name="Tanaka T."/>
            <person name="Ishii S."/>
            <person name="Yamamoto J."/>
            <person name="Saito K."/>
            <person name="Kawai Y."/>
            <person name="Isono Y."/>
            <person name="Nakamura Y."/>
            <person name="Nagahari K."/>
            <person name="Murakami K."/>
            <person name="Yasuda T."/>
            <person name="Iwayanagi T."/>
            <person name="Wagatsuma M."/>
            <person name="Shiratori A."/>
            <person name="Sudo H."/>
            <person name="Hosoiri T."/>
            <person name="Kaku Y."/>
            <person name="Kodaira H."/>
            <person name="Kondo H."/>
            <person name="Sugawara M."/>
            <person name="Takahashi M."/>
            <person name="Kanda K."/>
            <person name="Yokoi T."/>
            <person name="Furuya T."/>
            <person name="Kikkawa E."/>
            <person name="Omura Y."/>
            <person name="Abe K."/>
            <person name="Kamihara K."/>
            <person name="Katsuta N."/>
            <person name="Sato K."/>
            <person name="Tanikawa M."/>
            <person name="Yamazaki M."/>
            <person name="Ninomiya K."/>
            <person name="Ishibashi T."/>
            <person name="Yamashita H."/>
            <person name="Murakawa K."/>
            <person name="Fujimori K."/>
            <person name="Tanai H."/>
            <person name="Kimata M."/>
            <person name="Watanabe M."/>
            <person name="Hiraoka S."/>
            <person name="Chiba Y."/>
            <person name="Ishida S."/>
            <person name="Ono Y."/>
            <person name="Takiguchi S."/>
            <person name="Watanabe S."/>
            <person name="Yosida M."/>
            <person name="Hotuta T."/>
            <person name="Kusano J."/>
            <person name="Kanehori K."/>
            <person name="Takahashi-Fujii A."/>
            <person name="Hara H."/>
            <person name="Tanase T.-O."/>
            <person name="Nomura Y."/>
            <person name="Togiya S."/>
            <person name="Komai F."/>
            <person name="Hara R."/>
            <person name="Takeuchi K."/>
            <person name="Arita M."/>
            <person name="Imose N."/>
            <person name="Musashino K."/>
            <person name="Yuuki H."/>
            <person name="Oshima A."/>
            <person name="Sasaki N."/>
            <person name="Aotsuka S."/>
            <person name="Yoshikawa Y."/>
            <person name="Matsunawa H."/>
            <person name="Ichihara T."/>
            <person name="Shiohata N."/>
            <person name="Sano S."/>
            <person name="Moriya S."/>
            <person name="Momiyama H."/>
            <person name="Satoh N."/>
            <person name="Takami S."/>
            <person name="Terashima Y."/>
            <person name="Suzuki O."/>
            <person name="Nakagawa S."/>
            <person name="Senoh A."/>
            <person name="Mizoguchi H."/>
            <person name="Goto Y."/>
            <person name="Shimizu F."/>
            <person name="Wakebe H."/>
            <person name="Hishigaki H."/>
            <person name="Watanabe T."/>
            <person name="Sugiyama A."/>
            <person name="Takemoto M."/>
            <person name="Kawakami B."/>
            <person name="Yamazaki M."/>
            <person name="Watanabe K."/>
            <person name="Kumagai A."/>
            <person name="Itakura S."/>
            <person name="Fukuzumi Y."/>
            <person name="Fujimori Y."/>
            <person name="Komiyama M."/>
            <person name="Tashiro H."/>
            <person name="Tanigami A."/>
            <person name="Fujiwara T."/>
            <person name="Ono T."/>
            <person name="Yamada K."/>
            <person name="Fujii Y."/>
            <person name="Ozaki K."/>
            <person name="Hirao M."/>
            <person name="Ohmori Y."/>
            <person name="Kawabata A."/>
            <person name="Hikiji T."/>
            <person name="Kobatake N."/>
            <person name="Inagaki H."/>
            <person name="Ikema Y."/>
            <person name="Okamoto S."/>
            <person name="Okitani R."/>
            <person name="Kawakami T."/>
            <person name="Noguchi S."/>
            <person name="Itoh T."/>
            <person name="Shigeta K."/>
            <person name="Senba T."/>
            <person name="Matsumura K."/>
            <person name="Nakajima Y."/>
            <person name="Mizuno T."/>
            <person name="Morinaga M."/>
            <person name="Sasaki M."/>
            <person name="Togashi T."/>
            <person name="Oyama M."/>
            <person name="Hata H."/>
            <person name="Watanabe M."/>
            <person name="Komatsu T."/>
            <person name="Mizushima-Sugano J."/>
            <person name="Satoh T."/>
            <person name="Shirai Y."/>
            <person name="Takahashi Y."/>
            <person name="Nakagawa K."/>
            <person name="Okumura K."/>
            <person name="Nagase T."/>
            <person name="Nomura N."/>
            <person name="Kikuchi H."/>
            <person name="Masuho Y."/>
            <person name="Yamashita R."/>
            <person name="Nakai K."/>
            <person name="Yada T."/>
            <person name="Nakamura Y."/>
            <person name="Ohara O."/>
            <person name="Isogai T."/>
            <person name="Sugano S."/>
        </authorList>
    </citation>
    <scope>NUCLEOTIDE SEQUENCE [LARGE SCALE MRNA] (ISOFORM 2)</scope>
    <source>
        <tissue>Uterus</tissue>
    </source>
</reference>
<reference key="5">
    <citation type="submission" date="2004-06" db="EMBL/GenBank/DDBJ databases">
        <title>Cloning of human full open reading frames in Gateway(TM) system entry vector (pDONR201).</title>
        <authorList>
            <person name="Ebert L."/>
            <person name="Schick M."/>
            <person name="Neubert P."/>
            <person name="Schatten R."/>
            <person name="Henze S."/>
            <person name="Korn B."/>
        </authorList>
    </citation>
    <scope>NUCLEOTIDE SEQUENCE [LARGE SCALE MRNA] (ISOFORM 1)</scope>
</reference>
<reference key="6">
    <citation type="journal article" date="2003" name="Nature">
        <title>The DNA sequence and analysis of human chromosome 6.</title>
        <authorList>
            <person name="Mungall A.J."/>
            <person name="Palmer S.A."/>
            <person name="Sims S.K."/>
            <person name="Edwards C.A."/>
            <person name="Ashurst J.L."/>
            <person name="Wilming L."/>
            <person name="Jones M.C."/>
            <person name="Horton R."/>
            <person name="Hunt S.E."/>
            <person name="Scott C.E."/>
            <person name="Gilbert J.G.R."/>
            <person name="Clamp M.E."/>
            <person name="Bethel G."/>
            <person name="Milne S."/>
            <person name="Ainscough R."/>
            <person name="Almeida J.P."/>
            <person name="Ambrose K.D."/>
            <person name="Andrews T.D."/>
            <person name="Ashwell R.I.S."/>
            <person name="Babbage A.K."/>
            <person name="Bagguley C.L."/>
            <person name="Bailey J."/>
            <person name="Banerjee R."/>
            <person name="Barker D.J."/>
            <person name="Barlow K.F."/>
            <person name="Bates K."/>
            <person name="Beare D.M."/>
            <person name="Beasley H."/>
            <person name="Beasley O."/>
            <person name="Bird C.P."/>
            <person name="Blakey S.E."/>
            <person name="Bray-Allen S."/>
            <person name="Brook J."/>
            <person name="Brown A.J."/>
            <person name="Brown J.Y."/>
            <person name="Burford D.C."/>
            <person name="Burrill W."/>
            <person name="Burton J."/>
            <person name="Carder C."/>
            <person name="Carter N.P."/>
            <person name="Chapman J.C."/>
            <person name="Clark S.Y."/>
            <person name="Clark G."/>
            <person name="Clee C.M."/>
            <person name="Clegg S."/>
            <person name="Cobley V."/>
            <person name="Collier R.E."/>
            <person name="Collins J.E."/>
            <person name="Colman L.K."/>
            <person name="Corby N.R."/>
            <person name="Coville G.J."/>
            <person name="Culley K.M."/>
            <person name="Dhami P."/>
            <person name="Davies J."/>
            <person name="Dunn M."/>
            <person name="Earthrowl M.E."/>
            <person name="Ellington A.E."/>
            <person name="Evans K.A."/>
            <person name="Faulkner L."/>
            <person name="Francis M.D."/>
            <person name="Frankish A."/>
            <person name="Frankland J."/>
            <person name="French L."/>
            <person name="Garner P."/>
            <person name="Garnett J."/>
            <person name="Ghori M.J."/>
            <person name="Gilby L.M."/>
            <person name="Gillson C.J."/>
            <person name="Glithero R.J."/>
            <person name="Grafham D.V."/>
            <person name="Grant M."/>
            <person name="Gribble S."/>
            <person name="Griffiths C."/>
            <person name="Griffiths M.N.D."/>
            <person name="Hall R."/>
            <person name="Halls K.S."/>
            <person name="Hammond S."/>
            <person name="Harley J.L."/>
            <person name="Hart E.A."/>
            <person name="Heath P.D."/>
            <person name="Heathcott R."/>
            <person name="Holmes S.J."/>
            <person name="Howden P.J."/>
            <person name="Howe K.L."/>
            <person name="Howell G.R."/>
            <person name="Huckle E."/>
            <person name="Humphray S.J."/>
            <person name="Humphries M.D."/>
            <person name="Hunt A.R."/>
            <person name="Johnson C.M."/>
            <person name="Joy A.A."/>
            <person name="Kay M."/>
            <person name="Keenan S.J."/>
            <person name="Kimberley A.M."/>
            <person name="King A."/>
            <person name="Laird G.K."/>
            <person name="Langford C."/>
            <person name="Lawlor S."/>
            <person name="Leongamornlert D.A."/>
            <person name="Leversha M."/>
            <person name="Lloyd C.R."/>
            <person name="Lloyd D.M."/>
            <person name="Loveland J.E."/>
            <person name="Lovell J."/>
            <person name="Martin S."/>
            <person name="Mashreghi-Mohammadi M."/>
            <person name="Maslen G.L."/>
            <person name="Matthews L."/>
            <person name="McCann O.T."/>
            <person name="McLaren S.J."/>
            <person name="McLay K."/>
            <person name="McMurray A."/>
            <person name="Moore M.J.F."/>
            <person name="Mullikin J.C."/>
            <person name="Niblett D."/>
            <person name="Nickerson T."/>
            <person name="Novik K.L."/>
            <person name="Oliver K."/>
            <person name="Overton-Larty E.K."/>
            <person name="Parker A."/>
            <person name="Patel R."/>
            <person name="Pearce A.V."/>
            <person name="Peck A.I."/>
            <person name="Phillimore B.J.C.T."/>
            <person name="Phillips S."/>
            <person name="Plumb R.W."/>
            <person name="Porter K.M."/>
            <person name="Ramsey Y."/>
            <person name="Ranby S.A."/>
            <person name="Rice C.M."/>
            <person name="Ross M.T."/>
            <person name="Searle S.M."/>
            <person name="Sehra H.K."/>
            <person name="Sheridan E."/>
            <person name="Skuce C.D."/>
            <person name="Smith S."/>
            <person name="Smith M."/>
            <person name="Spraggon L."/>
            <person name="Squares S.L."/>
            <person name="Steward C.A."/>
            <person name="Sycamore N."/>
            <person name="Tamlyn-Hall G."/>
            <person name="Tester J."/>
            <person name="Theaker A.J."/>
            <person name="Thomas D.W."/>
            <person name="Thorpe A."/>
            <person name="Tracey A."/>
            <person name="Tromans A."/>
            <person name="Tubby B."/>
            <person name="Wall M."/>
            <person name="Wallis J.M."/>
            <person name="West A.P."/>
            <person name="White S.S."/>
            <person name="Whitehead S.L."/>
            <person name="Whittaker H."/>
            <person name="Wild A."/>
            <person name="Willey D.J."/>
            <person name="Wilmer T.E."/>
            <person name="Wood J.M."/>
            <person name="Wray P.W."/>
            <person name="Wyatt J.C."/>
            <person name="Young L."/>
            <person name="Younger R.M."/>
            <person name="Bentley D.R."/>
            <person name="Coulson A."/>
            <person name="Durbin R.M."/>
            <person name="Hubbard T."/>
            <person name="Sulston J.E."/>
            <person name="Dunham I."/>
            <person name="Rogers J."/>
            <person name="Beck S."/>
        </authorList>
    </citation>
    <scope>NUCLEOTIDE SEQUENCE [LARGE SCALE GENOMIC DNA]</scope>
</reference>
<reference key="7">
    <citation type="journal article" date="1993" name="Genes Dev.">
        <title>Multiple functional domains of human transcription factor IIB: distinct interactions with two general transcription factors and RNA polymerase II.</title>
        <authorList>
            <person name="Ha I."/>
            <person name="Roberts S."/>
            <person name="Maldonado E."/>
            <person name="Sun X."/>
            <person name="Kim L.U."/>
            <person name="Green M."/>
            <person name="Reinberg D."/>
        </authorList>
    </citation>
    <scope>INTERACTION WITH GTF2B</scope>
</reference>
<reference key="8">
    <citation type="journal article" date="1993" name="J. Virol.">
        <title>ICP4, the major transcriptional regulatory protein of herpes simplex virus type 1, forms a tripartite complex with TATA-binding protein and TFIIB.</title>
        <authorList>
            <person name="Smith C.A."/>
            <person name="Bates P."/>
            <person name="Rivera-Gonzalez R."/>
            <person name="Gu B."/>
            <person name="DeLuca N.A."/>
        </authorList>
    </citation>
    <scope>INTERACTION WITH HERPES SIMPLEX VIRUS 1 ICP4 (MICROBIAL INFECTION)</scope>
</reference>
<reference key="9">
    <citation type="journal article" date="1994" name="J. Biol. Chem.">
        <title>The RNA polymerase I transcription factor, upstream binding factor, interacts directly with the TATA box-binding protein.</title>
        <authorList>
            <person name="Kwon H."/>
            <person name="Green M.R."/>
        </authorList>
    </citation>
    <scope>INTERACTION WITH UBTF</scope>
</reference>
<reference key="10">
    <citation type="journal article" date="1994" name="Nature">
        <title>Direct interaction of human TFIID with the HIV-1 transactivator tat.</title>
        <authorList>
            <person name="Kashanchi F."/>
            <person name="Piras G."/>
            <person name="Radonovich M.F."/>
            <person name="Duvall J.F."/>
            <person name="Fattaey A."/>
            <person name="Chiang C.M."/>
            <person name="Roeder R.G."/>
            <person name="Brady J.N."/>
        </authorList>
    </citation>
    <scope>INTERACTION WITH HIV-1 TAT (MICROBIAL INFECTION)</scope>
</reference>
<reference key="11">
    <citation type="journal article" date="1994" name="Proc. Natl. Acad. Sci. U.S.A.">
        <title>The zinc finger region of the adenovirus E1A transactivating domain complexes with the TATA box binding protein.</title>
        <authorList>
            <person name="Geisberg J.V."/>
            <person name="Lee W.S."/>
            <person name="Berk A.J."/>
            <person name="Ricciardi R.P."/>
        </authorList>
    </citation>
    <scope>INTERACTION WITH HADV E1A PROTEIN (MICROBIAL INFECTION)</scope>
</reference>
<reference key="12">
    <citation type="journal article" date="1994" name="Science">
        <title>Reconstitution of transcription factor SL1: exclusive binding of TBP by SL1 or TFIID subunits.</title>
        <authorList>
            <person name="Comai L."/>
            <person name="Zomerdijk J.C.B.M."/>
            <person name="Beckmann H."/>
            <person name="Zhou S."/>
            <person name="Admon A."/>
            <person name="Tjian R."/>
        </authorList>
    </citation>
    <scope>INTERACTION WITH TAF1A; TAF1B AND TAF1C</scope>
</reference>
<reference key="13">
    <citation type="journal article" date="1995" name="J. Mol. Biol.">
        <title>Evidence for functional interaction between the HIV-1 Tat transactivator and the TATA box binding protein in vivo.</title>
        <authorList>
            <person name="Veschambre P."/>
            <person name="Simard P."/>
            <person name="Jalinot P."/>
        </authorList>
    </citation>
    <scope>INTERACTION WITH HIV-1 TAT (MICROBIAL INFECTION)</scope>
</reference>
<reference key="14">
    <citation type="journal article" date="1998" name="J. Biol. Chem.">
        <title>Characterization of functional domains of an embryonic stem cell coactivator UTF1 which are conserved and essential for potentiation of ATF-2 activity.</title>
        <authorList>
            <person name="Fukushima A."/>
            <person name="Okuda A."/>
            <person name="Nishimoto M."/>
            <person name="Seki N."/>
            <person name="Hori T.A."/>
            <person name="Muramatsu M."/>
        </authorList>
    </citation>
    <scope>INTERACTION WITH UTF1</scope>
</reference>
<reference key="15">
    <citation type="journal article" date="1998" name="Science">
        <title>Requirement of RSF and FACT for transcription of chromatin templates in vitro.</title>
        <authorList>
            <person name="LeRoy G."/>
            <person name="Orphanides G."/>
            <person name="Lane W.S."/>
            <person name="Reinberg D."/>
        </authorList>
    </citation>
    <scope>IDENTIFICATION IN THE TFIID COMPLEX</scope>
    <scope>FUNCTION</scope>
</reference>
<reference key="16">
    <citation type="journal article" date="1999" name="Cancer Res.">
        <title>The partial homeodomain of the transcription factor Pax-5 (BSAP) is an interaction motif for the retinoblastoma and TATA-binding proteins.</title>
        <authorList>
            <person name="Eberhard D."/>
            <person name="Busslinger M."/>
        </authorList>
    </citation>
    <scope>INTERACTION WITH PAX5</scope>
</reference>
<reference key="17">
    <citation type="journal article" date="2000" name="Cell Stress Chaperones">
        <title>Potential targets for HSF1 within the preinitiation complex.</title>
        <authorList>
            <person name="Yuan C.X."/>
            <person name="Gurley W.B."/>
        </authorList>
    </citation>
    <scope>INTERACTION WITH HSF1</scope>
</reference>
<reference key="18">
    <citation type="journal article" date="2005" name="J. Biol. Chem.">
        <title>TBP-TAF complex SL1 directs RNA polymerase I pre-initiation complex formation and stabilizes upstream binding factor at the rDNA promoter.</title>
        <authorList>
            <person name="Friedrich J.K."/>
            <person name="Panov K.I."/>
            <person name="Cabart P."/>
            <person name="Russell J."/>
            <person name="Zomerdijk J.C.B.M."/>
        </authorList>
    </citation>
    <scope>FUNCTION OF THE SL1/TIF-IB COMPLEX</scope>
</reference>
<reference key="19">
    <citation type="journal article" date="2007" name="DNA Cell Biol.">
        <title>Genomics, evolution, and expression of TBPL2, a member of the TBP family.</title>
        <authorList>
            <person name="Di Pietro C."/>
            <person name="Ragusa M."/>
            <person name="Duro L."/>
            <person name="Guglielmino M.R."/>
            <person name="Barbagallo D."/>
            <person name="Carnemolla A."/>
            <person name="Lagana A."/>
            <person name="Buffa P."/>
            <person name="Angelica R."/>
            <person name="Rinaldi A."/>
            <person name="Calafato M.S."/>
            <person name="Milicia I."/>
            <person name="Caserta C."/>
            <person name="Giugno R."/>
            <person name="Pulvirenti A."/>
            <person name="Giunta V."/>
            <person name="Rapisarda A."/>
            <person name="Di Pietro V."/>
            <person name="Grillo A."/>
            <person name="Messina A."/>
            <person name="Ferro A."/>
            <person name="Grzeschik K.H."/>
            <person name="Purrello M."/>
        </authorList>
    </citation>
    <scope>TISSUE SPECIFICITY</scope>
</reference>
<reference key="20">
    <citation type="journal article" date="1999" name="J. Biol. Chem.">
        <title>SPI-B activates transcription via a unique proline, serine, and threonine domain and exhibits DNA binding affinity differences from PU.1.</title>
        <authorList>
            <person name="Rao S."/>
            <person name="Matsumura A."/>
            <person name="Yoon J."/>
            <person name="Simon M.C."/>
        </authorList>
    </citation>
    <scope>INTERACTION WITH SPIB</scope>
</reference>
<reference key="21">
    <citation type="journal article" date="1999" name="J. Biol. Chem.">
        <title>A nuclear factor ASC-2, as a cancer-amplified transcriptional coactivator essential for ligand-dependent transactivation by nuclear receptors in vivo.</title>
        <authorList>
            <person name="Lee S.-K."/>
            <person name="Anzick S.L."/>
            <person name="Choi J.-E."/>
            <person name="Bubendorf L."/>
            <person name="Guan X.-Y."/>
            <person name="Jung Y.-K."/>
            <person name="Kallioniemi O.-P."/>
            <person name="Kononen J."/>
            <person name="Trent J.M."/>
            <person name="Azorsa D."/>
            <person name="Jhun B.-H."/>
            <person name="Cheong J.H."/>
            <person name="Lee Y.C."/>
            <person name="Meltzer P.S."/>
            <person name="Lee J.W."/>
        </authorList>
    </citation>
    <scope>INTERACTION WITH NCOA6</scope>
</reference>
<reference key="22">
    <citation type="journal article" date="1999" name="Oncogene">
        <title>Exon 4-encoded acidic domain in the epithelium-restricted Ets factor, ESX, confers potent transactivating capacity and binds to TATA-binding protein (TBP).</title>
        <authorList>
            <person name="Chang C.-H."/>
            <person name="Scott G.K."/>
            <person name="Baldwin M.A."/>
            <person name="Benz C.C."/>
        </authorList>
    </citation>
    <scope>INTERACTION WITH ELF3</scope>
</reference>
<reference key="23">
    <citation type="journal article" date="2001" name="J. Biol. Chem.">
        <title>BRFU, a TFIIB-like factor, is directly recruited to the TATA-box of polymerase III small nuclear RNA gene promoters through its interaction with TATA-binding protein.</title>
        <authorList>
            <person name="Cabart P."/>
            <person name="Murphy S."/>
        </authorList>
    </citation>
    <scope>INTERACTION WITH BRF2</scope>
</reference>
<reference key="24">
    <citation type="journal article" date="2001" name="Mol. Cell. Biol.">
        <title>The TFIID components human TAFII140 and Drosophila BIP2 (TAFII155) are novel metazoan homologues of yeast TAFII47 containing a histone fold and a PHD finger.</title>
        <authorList>
            <person name="Gangloff Y.G."/>
            <person name="Pointud J.-C."/>
            <person name="Thuault S."/>
            <person name="Carre L."/>
            <person name="Romier C."/>
            <person name="Muratoglu S."/>
            <person name="Brand M."/>
            <person name="Tora L."/>
            <person name="Couderc J.-L."/>
            <person name="Davidson I."/>
        </authorList>
    </citation>
    <scope>INTERACTION WITH TAF3</scope>
</reference>
<reference key="25">
    <citation type="journal article" date="2002" name="Hum. Mol. Genet.">
        <title>Functional substitution for TAF(II)250 by a retroposed homolog that is expressed in human spermatogenesis.</title>
        <authorList>
            <person name="Wang P.J."/>
            <person name="Page D.C."/>
        </authorList>
    </citation>
    <scope>INTERACTION WITH TAF1L</scope>
</reference>
<reference key="26">
    <citation type="journal article" date="2003" name="J. Biol. Chem.">
        <title>The small nuclear RNA-activating protein 190 Myb DNA binding domain stimulates TATA box-binding protein-TATA box recognition.</title>
        <authorList>
            <person name="Hinkley C.S."/>
            <person name="Hirsch H.A."/>
            <person name="Gu L."/>
            <person name="LaMere B."/>
            <person name="Henry R.W."/>
        </authorList>
    </citation>
    <scope>INTERACTION WITH SNAPC1; SNAPC2 AND SNAPC4</scope>
    <scope>FUNCTION</scope>
</reference>
<reference key="27">
    <citation type="journal article" date="2005" name="PLoS Biol.">
        <title>HIV-1 Tat stimulates transcription complex assembly through recruitment of TBP in the absence of TAFs.</title>
        <authorList>
            <person name="Raha T."/>
            <person name="Cheng S.W.G."/>
            <person name="Green M.R."/>
        </authorList>
    </citation>
    <scope>INTERACTION WITH HIV-1 TAT (MICROBIAL INFECTION)</scope>
</reference>
<reference key="28">
    <citation type="journal article" date="2009" name="J. Biol. Chem.">
        <title>MCAF1/AM is involved in Sp1-mediated maintenance of cancer-associated telomerase activity.</title>
        <authorList>
            <person name="Liu L."/>
            <person name="Ishihara K."/>
            <person name="Ichimura T."/>
            <person name="Fujita N."/>
            <person name="Hino S."/>
            <person name="Tomita S."/>
            <person name="Watanabe S."/>
            <person name="Saitoh N."/>
            <person name="Ito T."/>
            <person name="Nakao M."/>
        </authorList>
    </citation>
    <scope>INTERACTION WITH SP1</scope>
</reference>
<reference key="29">
    <citation type="journal article" date="2011" name="BMC Syst. Biol.">
        <title>Initial characterization of the human central proteome.</title>
        <authorList>
            <person name="Burkard T.R."/>
            <person name="Planyavsky M."/>
            <person name="Kaupe I."/>
            <person name="Breitwieser F.P."/>
            <person name="Buerckstuemmer T."/>
            <person name="Bennett K.L."/>
            <person name="Superti-Furga G."/>
            <person name="Colinge J."/>
        </authorList>
    </citation>
    <scope>IDENTIFICATION BY MASS SPECTROMETRY [LARGE SCALE ANALYSIS]</scope>
</reference>
<reference key="30">
    <citation type="journal article" date="2018" name="Front. Immunol.">
        <title>Herpes Simplex Virus Type 2 Infection-Induced Expression of CXCR3 Ligands Promotes CD4+ T Cell Migration and Is Regulated by the Viral Immediate-Early Protein ICP4.</title>
        <authorList>
            <person name="Zhang M."/>
            <person name="Deng X."/>
            <person name="Guan X."/>
            <person name="Geng L."/>
            <person name="Fu M."/>
            <person name="Zhang B."/>
            <person name="Chen R."/>
            <person name="Hu H."/>
            <person name="Hu K."/>
            <person name="Zhang D."/>
            <person name="Li M."/>
            <person name="Liu Y."/>
            <person name="Gong S."/>
            <person name="Hu Q."/>
        </authorList>
    </citation>
    <scope>INTERACTION WITH HERPES SIMPLEX VIRUS 2 PROTEIN ICP4 (MICROBIAL INFECTION)</scope>
</reference>
<reference key="31">
    <citation type="journal article" date="1996" name="Proc. Natl. Acad. Sci. U.S.A.">
        <title>Crystal structure of a human TATA box-binding protein/TATA element complex.</title>
        <authorList>
            <person name="Nikolov D.B."/>
            <person name="Chen H."/>
            <person name="Halay E.D."/>
            <person name="Hoffmann A."/>
            <person name="Roeder R.G."/>
            <person name="Burley S.K."/>
        </authorList>
    </citation>
    <scope>X-RAY CRYSTALLOGRAPHY (1.9 ANGSTROMS) OF 159-337 IN COMPLEX WITH DNA</scope>
</reference>
<reference key="32">
    <citation type="journal article" date="1996" name="J. Mol. Biol.">
        <title>How proteins recognize the TATA box.</title>
        <authorList>
            <person name="Juo Z.S."/>
            <person name="Chiu T.K."/>
            <person name="Leiberman P.M."/>
            <person name="Baikalov I."/>
            <person name="Berk A.J."/>
            <person name="Dickerson R.E."/>
        </authorList>
    </citation>
    <scope>X-RAY CRYSTALLOGRAPHY (2.9 ANGSTROMS) OF 159-339 IN COMPLEX WITH DNA</scope>
</reference>
<reference key="33">
    <citation type="journal article" date="2000" name="EMBO J.">
        <title>Structural basis of preinitiation complex assembly on human pol II promoters.</title>
        <authorList>
            <person name="Tsai F.T.F."/>
            <person name="Sigler P.B."/>
        </authorList>
    </citation>
    <scope>X-RAY CRYSTALLOGRAPHY (2.65 ANGSTROMS) OF 159-337 IN COMPLEX WITH GTF2B AND DNA</scope>
</reference>
<reference key="34">
    <citation type="journal article" date="2001" name="Cell">
        <title>Crystal structure of negative cofactor 2 recognizing the TBP-DNA transcription complex.</title>
        <authorList>
            <person name="Kamada K."/>
            <person name="Shu F."/>
            <person name="Chen H."/>
            <person name="Malik S."/>
            <person name="Stelzer G."/>
            <person name="Roeder R.G."/>
            <person name="Meisterernst M."/>
            <person name="Burley S.K."/>
        </authorList>
    </citation>
    <scope>X-RAY CRYSTALLOGRAPHY (2.62 ANGSTROMS) OF 159-339 IN COMPLEX WITH DR1; DRAP1 AND DNA</scope>
</reference>
<reference key="35">
    <citation type="journal article" date="1999" name="Hum. Mol. Genet.">
        <title>A neurological disease caused by an expanded CAG trinucleotide repeat in the TATA-binding protein gene: a new polyglutamine disease?</title>
        <authorList>
            <person name="Koide R."/>
            <person name="Kobayashi S."/>
            <person name="Shimohata T."/>
            <person name="Ikeuchi T."/>
            <person name="Maruyama M."/>
            <person name="Saito M."/>
            <person name="Yamada M."/>
            <person name="Takahashi H."/>
            <person name="Tsuji S."/>
        </authorList>
    </citation>
    <scope>POLYMORPHISM OF POLY-GLN REGION</scope>
</reference>
<reference key="36">
    <citation type="journal article" date="2001" name="Eur. J. Hum. Genet.">
        <title>Different types of repeat expansion in the TATA-binding protein gene are associated with a new form of inherited ataxia.</title>
        <authorList>
            <person name="Zuhlke C."/>
            <person name="Hellenbroich Y."/>
            <person name="Dalski A."/>
            <person name="Kononowa N."/>
            <person name="Hagenah J."/>
            <person name="Vieregge P."/>
            <person name="Riess O."/>
            <person name="Klein C."/>
            <person name="Schwinger E."/>
        </authorList>
    </citation>
    <scope>POLYMORPHISM OF POLY-GLN REGION</scope>
    <scope>INVOLVEMENT IN SCA17</scope>
</reference>
<reference key="37">
    <citation type="journal article" date="2001" name="Hum. Mol. Genet.">
        <title>SCA17, a novel autosomal dominant cerebellar ataxia caused by an expanded polyglutamine in TATA-binding protein.</title>
        <authorList>
            <person name="Nakamura K."/>
            <person name="Jeong S.-Y."/>
            <person name="Uchihara T."/>
            <person name="Anno M."/>
            <person name="Nagashima K."/>
            <person name="Nagashima T."/>
            <person name="Ikeda S."/>
            <person name="Tsuji S."/>
            <person name="Kanazawa I."/>
        </authorList>
    </citation>
    <scope>POLYMORPHISM OF POLY-GLN REGION</scope>
    <scope>INVOLVEMENT IN SCA17</scope>
</reference>
<reference key="38">
    <citation type="journal article" date="2002" name="Arch. Neurol.">
        <title>Trinucleotide repeats in 202 families with ataxia: a small expanded (CAG)n allele at the SCA17 locus.</title>
        <authorList>
            <person name="Silveira I."/>
            <person name="Miranda C."/>
            <person name="Guimaraes L."/>
            <person name="Moreira M.-C."/>
            <person name="Alonso I."/>
            <person name="Mendonca P."/>
            <person name="Ferro A."/>
            <person name="Pinto-Basto J."/>
            <person name="Coelho J."/>
            <person name="Ferreirinha F."/>
            <person name="Poirier J."/>
            <person name="Parreira E."/>
            <person name="Vale J."/>
            <person name="Januario C."/>
            <person name="Barbot C."/>
            <person name="Tuna A."/>
            <person name="Barros J."/>
            <person name="Koide R."/>
            <person name="Tsuji S."/>
            <person name="Holmes S.E."/>
            <person name="Margolis R.L."/>
            <person name="Jardim L."/>
            <person name="Pandolfo M."/>
            <person name="Coutinho P."/>
            <person name="Sequeiros J."/>
        </authorList>
    </citation>
    <scope>POLYMORPHISM OF POLY-GLN REGION</scope>
    <scope>INVOLVEMENT IN SCA17</scope>
</reference>
<reference key="39">
    <citation type="journal article" date="2015" name="Cell">
        <title>Redox signaling by the RNA polymerase III TFIIB-related factor Brf2.</title>
        <authorList>
            <person name="Gouge J."/>
            <person name="Satia K."/>
            <person name="Guthertz N."/>
            <person name="Widya M."/>
            <person name="Thompson A.J."/>
            <person name="Cousin P."/>
            <person name="Dergai O."/>
            <person name="Hernandez N."/>
            <person name="Vannini A."/>
        </authorList>
    </citation>
    <scope>X-RAY CRYSTALLOGRAPHY (1.90 ANGSTROMS) OF 159-339 IN COMPLEX WITH BRF2 AND DNA</scope>
    <scope>FUNCTION</scope>
    <scope>SUBUNIT</scope>
</reference>
<reference key="40">
    <citation type="journal article" date="2016" name="Nature">
        <title>Near-atomic resolution visualization of human transcription promoter opening.</title>
        <authorList>
            <person name="He Y."/>
            <person name="Yan C."/>
            <person name="Fang J."/>
            <person name="Inouye C."/>
            <person name="Tjian R."/>
            <person name="Ivanov I."/>
            <person name="Nogales E."/>
        </authorList>
    </citation>
    <scope>STRUCTURE BY ELECTRON MICROSCOPY (3.90 ANGSTROMS) OF TRANSCRIPTION PRE-INITIATION COMPLEX IN COMPLEX WITH PROMOTER DNA</scope>
    <scope>FUNCTION</scope>
    <scope>SUBUNIT</scope>
</reference>
<reference key="41">
    <citation type="journal article" date="2016" name="Nature">
        <title>Structure of promoter-bound TFIID and model of human pre-initiation complex assembly.</title>
        <authorList>
            <person name="Louder R.K."/>
            <person name="He Y."/>
            <person name="Lopez-Blanco J.R."/>
            <person name="Fang J."/>
            <person name="Chacon P."/>
            <person name="Nogales E."/>
        </authorList>
    </citation>
    <scope>STRUCTURE BY ELECTRON MICROSCOPY (8.50 ANGSTROMS)</scope>
    <scope>SUBUNIT</scope>
    <scope>SUBCELLULAR LOCATION</scope>
</reference>
<reference evidence="39 40 41 42 43 44 45 46 47 48" key="42">
    <citation type="journal article" date="2021" name="Science">
        <title>Structural insights into preinitiation complex assembly on core promoters.</title>
        <authorList>
            <person name="Chen X."/>
            <person name="Qi Y."/>
            <person name="Wu Z."/>
            <person name="Wang X."/>
            <person name="Li J."/>
            <person name="Zhao D."/>
            <person name="Hou H."/>
            <person name="Li Y."/>
            <person name="Yu Z."/>
            <person name="Liu W."/>
            <person name="Wang M."/>
            <person name="Ren Y."/>
            <person name="Li Z."/>
            <person name="Yang H."/>
            <person name="Xu Y."/>
        </authorList>
    </citation>
    <scope>STRUCTURE BY ELECTRON MICROSCOPY (3.16 ANGSTROMS)</scope>
    <scope>FUNCTION</scope>
    <scope>IDENTIFICATION IN THE TFIID COMPLEX</scope>
    <scope>SUBUNIT</scope>
</reference>
<evidence type="ECO:0000250" key="1">
    <source>
        <dbReference type="UniProtKB" id="P29037"/>
    </source>
</evidence>
<evidence type="ECO:0000256" key="2">
    <source>
        <dbReference type="SAM" id="MobiDB-lite"/>
    </source>
</evidence>
<evidence type="ECO:0000269" key="3">
    <source>
    </source>
</evidence>
<evidence type="ECO:0000269" key="4">
    <source>
    </source>
</evidence>
<evidence type="ECO:0000269" key="5">
    <source>
    </source>
</evidence>
<evidence type="ECO:0000269" key="6">
    <source>
    </source>
</evidence>
<evidence type="ECO:0000269" key="7">
    <source>
    </source>
</evidence>
<evidence type="ECO:0000269" key="8">
    <source>
    </source>
</evidence>
<evidence type="ECO:0000269" key="9">
    <source>
    </source>
</evidence>
<evidence type="ECO:0000269" key="10">
    <source>
    </source>
</evidence>
<evidence type="ECO:0000269" key="11">
    <source>
    </source>
</evidence>
<evidence type="ECO:0000269" key="12">
    <source>
    </source>
</evidence>
<evidence type="ECO:0000269" key="13">
    <source>
    </source>
</evidence>
<evidence type="ECO:0000269" key="14">
    <source>
    </source>
</evidence>
<evidence type="ECO:0000269" key="15">
    <source>
    </source>
</evidence>
<evidence type="ECO:0000269" key="16">
    <source>
    </source>
</evidence>
<evidence type="ECO:0000269" key="17">
    <source>
    </source>
</evidence>
<evidence type="ECO:0000269" key="18">
    <source>
    </source>
</evidence>
<evidence type="ECO:0000269" key="19">
    <source>
    </source>
</evidence>
<evidence type="ECO:0000269" key="20">
    <source>
    </source>
</evidence>
<evidence type="ECO:0000269" key="21">
    <source>
    </source>
</evidence>
<evidence type="ECO:0000269" key="22">
    <source>
    </source>
</evidence>
<evidence type="ECO:0000269" key="23">
    <source>
    </source>
</evidence>
<evidence type="ECO:0000269" key="24">
    <source>
    </source>
</evidence>
<evidence type="ECO:0000269" key="25">
    <source>
    </source>
</evidence>
<evidence type="ECO:0000269" key="26">
    <source>
    </source>
</evidence>
<evidence type="ECO:0000269" key="27">
    <source>
    </source>
</evidence>
<evidence type="ECO:0000269" key="28">
    <source>
    </source>
</evidence>
<evidence type="ECO:0000269" key="29">
    <source>
    </source>
</evidence>
<evidence type="ECO:0000269" key="30">
    <source>
    </source>
</evidence>
<evidence type="ECO:0000269" key="31">
    <source>
    </source>
</evidence>
<evidence type="ECO:0000269" key="32">
    <source>
    </source>
</evidence>
<evidence type="ECO:0000269" key="33">
    <source>
    </source>
</evidence>
<evidence type="ECO:0000303" key="34">
    <source>
    </source>
</evidence>
<evidence type="ECO:0000303" key="35">
    <source>
    </source>
</evidence>
<evidence type="ECO:0000303" key="36">
    <source>
    </source>
</evidence>
<evidence type="ECO:0000305" key="37"/>
<evidence type="ECO:0007744" key="38">
    <source>
        <dbReference type="PDB" id="5IYD"/>
    </source>
</evidence>
<evidence type="ECO:0007744" key="39">
    <source>
        <dbReference type="PDB" id="7EDX"/>
    </source>
</evidence>
<evidence type="ECO:0007744" key="40">
    <source>
        <dbReference type="PDB" id="7EG7"/>
    </source>
</evidence>
<evidence type="ECO:0007744" key="41">
    <source>
        <dbReference type="PDB" id="7EG8"/>
    </source>
</evidence>
<evidence type="ECO:0007744" key="42">
    <source>
        <dbReference type="PDB" id="7EG9"/>
    </source>
</evidence>
<evidence type="ECO:0007744" key="43">
    <source>
        <dbReference type="PDB" id="7EGA"/>
    </source>
</evidence>
<evidence type="ECO:0007744" key="44">
    <source>
        <dbReference type="PDB" id="7EGB"/>
    </source>
</evidence>
<evidence type="ECO:0007744" key="45">
    <source>
        <dbReference type="PDB" id="7EGC"/>
    </source>
</evidence>
<evidence type="ECO:0007744" key="46">
    <source>
        <dbReference type="PDB" id="7EGD"/>
    </source>
</evidence>
<evidence type="ECO:0007744" key="47">
    <source>
        <dbReference type="PDB" id="7EGE"/>
    </source>
</evidence>
<evidence type="ECO:0007744" key="48">
    <source>
        <dbReference type="PDB" id="7EGF"/>
    </source>
</evidence>
<evidence type="ECO:0007829" key="49">
    <source>
        <dbReference type="PDB" id="1CDW"/>
    </source>
</evidence>
<evidence type="ECO:0007829" key="50">
    <source>
        <dbReference type="PDB" id="7EGF"/>
    </source>
</evidence>
<evidence type="ECO:0007829" key="51">
    <source>
        <dbReference type="PDB" id="7NVU"/>
    </source>
</evidence>
<protein>
    <recommendedName>
        <fullName>TATA-box-binding protein</fullName>
    </recommendedName>
    <alternativeName>
        <fullName>TATA sequence-binding protein</fullName>
    </alternativeName>
    <alternativeName>
        <fullName evidence="35 36">TATA-binding factor</fullName>
    </alternativeName>
    <alternativeName>
        <fullName>TATA-box factor</fullName>
    </alternativeName>
    <alternativeName>
        <fullName>Transcription initiation factor TFIID TBP subunit</fullName>
    </alternativeName>
</protein>
<accession>P20226</accession>
<accession>B4E3B3</accession>
<accession>F5H869</accession>
<accession>Q16845</accession>
<accession>Q6IBM6</accession>
<accession>Q9UC02</accession>
<dbReference type="EMBL" id="X54993">
    <property type="protein sequence ID" value="CAA38736.1"/>
    <property type="molecule type" value="mRNA"/>
</dbReference>
<dbReference type="EMBL" id="M55654">
    <property type="protein sequence ID" value="AAA36731.1"/>
    <property type="molecule type" value="mRNA"/>
</dbReference>
<dbReference type="EMBL" id="M34960">
    <property type="protein sequence ID" value="AAC03409.1"/>
    <property type="molecule type" value="mRNA"/>
</dbReference>
<dbReference type="EMBL" id="AK304648">
    <property type="protein sequence ID" value="BAG65425.1"/>
    <property type="molecule type" value="mRNA"/>
</dbReference>
<dbReference type="EMBL" id="CR456776">
    <property type="protein sequence ID" value="CAG33057.1"/>
    <property type="molecule type" value="mRNA"/>
</dbReference>
<dbReference type="EMBL" id="AL031259">
    <property type="status" value="NOT_ANNOTATED_CDS"/>
    <property type="molecule type" value="Genomic_DNA"/>
</dbReference>
<dbReference type="CCDS" id="CCDS5315.1">
    <molecule id="P20226-1"/>
</dbReference>
<dbReference type="CCDS" id="CCDS55077.1">
    <molecule id="P20226-2"/>
</dbReference>
<dbReference type="PIR" id="A34830">
    <property type="entry name" value="TWHU2D"/>
</dbReference>
<dbReference type="RefSeq" id="NP_001165556.1">
    <molecule id="P20226-2"/>
    <property type="nucleotide sequence ID" value="NM_001172085.2"/>
</dbReference>
<dbReference type="RefSeq" id="NP_003185.1">
    <molecule id="P20226-1"/>
    <property type="nucleotide sequence ID" value="NM_003194.5"/>
</dbReference>
<dbReference type="PDB" id="1C9B">
    <property type="method" value="X-ray"/>
    <property type="resolution" value="2.65 A"/>
    <property type="chains" value="B/F/J/N/R=159-337"/>
</dbReference>
<dbReference type="PDB" id="1CDW">
    <property type="method" value="X-ray"/>
    <property type="resolution" value="1.90 A"/>
    <property type="chains" value="A=159-337"/>
</dbReference>
<dbReference type="PDB" id="1JFI">
    <property type="method" value="X-ray"/>
    <property type="resolution" value="2.62 A"/>
    <property type="chains" value="C=159-339"/>
</dbReference>
<dbReference type="PDB" id="1NVP">
    <property type="method" value="X-ray"/>
    <property type="resolution" value="2.10 A"/>
    <property type="chains" value="A=159-339"/>
</dbReference>
<dbReference type="PDB" id="1TGH">
    <property type="method" value="X-ray"/>
    <property type="resolution" value="2.90 A"/>
    <property type="chains" value="A=156-339"/>
</dbReference>
<dbReference type="PDB" id="4ROC">
    <property type="method" value="X-ray"/>
    <property type="resolution" value="1.90 A"/>
    <property type="chains" value="B=159-339"/>
</dbReference>
<dbReference type="PDB" id="4ROD">
    <property type="method" value="X-ray"/>
    <property type="resolution" value="2.70 A"/>
    <property type="chains" value="B=159-339"/>
</dbReference>
<dbReference type="PDB" id="4ROE">
    <property type="method" value="X-ray"/>
    <property type="resolution" value="2.20 A"/>
    <property type="chains" value="B=159-339"/>
</dbReference>
<dbReference type="PDB" id="5FUR">
    <property type="method" value="EM"/>
    <property type="resolution" value="8.50 A"/>
    <property type="chains" value="A=1-339"/>
</dbReference>
<dbReference type="PDB" id="5IY6">
    <property type="method" value="EM"/>
    <property type="resolution" value="7.20 A"/>
    <property type="chains" value="P=1-339"/>
</dbReference>
<dbReference type="PDB" id="5IY7">
    <property type="method" value="EM"/>
    <property type="resolution" value="8.60 A"/>
    <property type="chains" value="P=1-339"/>
</dbReference>
<dbReference type="PDB" id="5IY8">
    <property type="method" value="EM"/>
    <property type="resolution" value="7.90 A"/>
    <property type="chains" value="P=1-339"/>
</dbReference>
<dbReference type="PDB" id="5IY9">
    <property type="method" value="EM"/>
    <property type="resolution" value="6.30 A"/>
    <property type="chains" value="P=1-339"/>
</dbReference>
<dbReference type="PDB" id="5IYA">
    <property type="method" value="EM"/>
    <property type="resolution" value="5.40 A"/>
    <property type="chains" value="P=1-339"/>
</dbReference>
<dbReference type="PDB" id="5IYB">
    <property type="method" value="EM"/>
    <property type="resolution" value="3.90 A"/>
    <property type="chains" value="P=1-339"/>
</dbReference>
<dbReference type="PDB" id="5IYC">
    <property type="method" value="EM"/>
    <property type="resolution" value="3.90 A"/>
    <property type="chains" value="P=1-339"/>
</dbReference>
<dbReference type="PDB" id="5IYD">
    <property type="method" value="EM"/>
    <property type="resolution" value="3.90 A"/>
    <property type="chains" value="P=1-339"/>
</dbReference>
<dbReference type="PDB" id="5N9G">
    <property type="method" value="X-ray"/>
    <property type="resolution" value="2.70 A"/>
    <property type="chains" value="B/G=159-339"/>
</dbReference>
<dbReference type="PDB" id="6MZD">
    <property type="method" value="EM"/>
    <property type="resolution" value="9.80 A"/>
    <property type="chains" value="T=1-339"/>
</dbReference>
<dbReference type="PDB" id="6MZL">
    <property type="method" value="EM"/>
    <property type="resolution" value="23.00 A"/>
    <property type="chains" value="T=1-339"/>
</dbReference>
<dbReference type="PDB" id="6MZM">
    <property type="method" value="EM"/>
    <property type="resolution" value="7.50 A"/>
    <property type="chains" value="T=1-339"/>
</dbReference>
<dbReference type="PDB" id="6O9L">
    <property type="method" value="EM"/>
    <property type="resolution" value="7.20 A"/>
    <property type="chains" value="P=1-339"/>
</dbReference>
<dbReference type="PDB" id="7EDX">
    <property type="method" value="EM"/>
    <property type="resolution" value="4.50 A"/>
    <property type="chains" value="P=1-339"/>
</dbReference>
<dbReference type="PDB" id="7EG7">
    <property type="method" value="EM"/>
    <property type="resolution" value="6.20 A"/>
    <property type="chains" value="P=1-339"/>
</dbReference>
<dbReference type="PDB" id="7EG8">
    <property type="method" value="EM"/>
    <property type="resolution" value="7.40 A"/>
    <property type="chains" value="P=1-339"/>
</dbReference>
<dbReference type="PDB" id="7EG9">
    <property type="method" value="EM"/>
    <property type="resolution" value="3.70 A"/>
    <property type="chains" value="P=1-339"/>
</dbReference>
<dbReference type="PDB" id="7EGA">
    <property type="method" value="EM"/>
    <property type="resolution" value="4.10 A"/>
    <property type="chains" value="P=1-339"/>
</dbReference>
<dbReference type="PDB" id="7EGB">
    <property type="method" value="EM"/>
    <property type="resolution" value="3.30 A"/>
    <property type="chains" value="P=1-339"/>
</dbReference>
<dbReference type="PDB" id="7EGC">
    <property type="method" value="EM"/>
    <property type="resolution" value="3.90 A"/>
    <property type="chains" value="P=1-339"/>
</dbReference>
<dbReference type="PDB" id="7EGD">
    <property type="method" value="EM"/>
    <property type="resolution" value="6.75 A"/>
    <property type="chains" value="P=1-339"/>
</dbReference>
<dbReference type="PDB" id="7EGE">
    <property type="method" value="EM"/>
    <property type="resolution" value="9.00 A"/>
    <property type="chains" value="P=1-339"/>
</dbReference>
<dbReference type="PDB" id="7EGF">
    <property type="method" value="EM"/>
    <property type="resolution" value="3.16 A"/>
    <property type="chains" value="P=1-339"/>
</dbReference>
<dbReference type="PDB" id="7EGI">
    <property type="method" value="EM"/>
    <property type="resolution" value="9.82 A"/>
    <property type="chains" value="P=1-339"/>
</dbReference>
<dbReference type="PDB" id="7EGJ">
    <property type="method" value="EM"/>
    <property type="resolution" value="8.64 A"/>
    <property type="chains" value="P=1-339"/>
</dbReference>
<dbReference type="PDB" id="7ENA">
    <property type="method" value="EM"/>
    <property type="resolution" value="4.07 A"/>
    <property type="chains" value="DP=1-339"/>
</dbReference>
<dbReference type="PDB" id="7ENC">
    <property type="method" value="EM"/>
    <property type="resolution" value="4.13 A"/>
    <property type="chains" value="DP=1-339"/>
</dbReference>
<dbReference type="PDB" id="7LBM">
    <property type="method" value="EM"/>
    <property type="resolution" value="4.80 A"/>
    <property type="chains" value="P=1-339"/>
</dbReference>
<dbReference type="PDB" id="7NVR">
    <property type="method" value="EM"/>
    <property type="resolution" value="4.50 A"/>
    <property type="chains" value="O=1-339"/>
</dbReference>
<dbReference type="PDB" id="7NVS">
    <property type="method" value="EM"/>
    <property type="resolution" value="2.80 A"/>
    <property type="chains" value="O=1-339"/>
</dbReference>
<dbReference type="PDB" id="7NVT">
    <property type="method" value="EM"/>
    <property type="resolution" value="2.90 A"/>
    <property type="chains" value="O=1-339"/>
</dbReference>
<dbReference type="PDB" id="7NVU">
    <property type="method" value="EM"/>
    <property type="resolution" value="2.50 A"/>
    <property type="chains" value="O=1-339"/>
</dbReference>
<dbReference type="PDB" id="7NVY">
    <property type="method" value="EM"/>
    <property type="resolution" value="7.30 A"/>
    <property type="chains" value="O=1-339"/>
</dbReference>
<dbReference type="PDB" id="7NVZ">
    <property type="method" value="EM"/>
    <property type="resolution" value="7.20 A"/>
    <property type="chains" value="O=1-339"/>
</dbReference>
<dbReference type="PDB" id="7NW0">
    <property type="method" value="EM"/>
    <property type="resolution" value="6.60 A"/>
    <property type="chains" value="O=1-339"/>
</dbReference>
<dbReference type="PDB" id="7ZWC">
    <property type="method" value="EM"/>
    <property type="resolution" value="3.20 A"/>
    <property type="chains" value="O=1-339"/>
</dbReference>
<dbReference type="PDB" id="7ZWD">
    <property type="method" value="EM"/>
    <property type="resolution" value="3.00 A"/>
    <property type="chains" value="O=1-339"/>
</dbReference>
<dbReference type="PDB" id="7ZX7">
    <property type="method" value="EM"/>
    <property type="resolution" value="3.40 A"/>
    <property type="chains" value="O=1-339"/>
</dbReference>
<dbReference type="PDB" id="7ZX8">
    <property type="method" value="EM"/>
    <property type="resolution" value="3.00 A"/>
    <property type="chains" value="O=1-339"/>
</dbReference>
<dbReference type="PDB" id="7ZXE">
    <property type="method" value="EM"/>
    <property type="resolution" value="3.50 A"/>
    <property type="chains" value="O=1-339"/>
</dbReference>
<dbReference type="PDB" id="8BVW">
    <property type="method" value="EM"/>
    <property type="resolution" value="4.00 A"/>
    <property type="chains" value="O=1-339"/>
</dbReference>
<dbReference type="PDB" id="8BYQ">
    <property type="method" value="EM"/>
    <property type="resolution" value="4.10 A"/>
    <property type="chains" value="O=1-339"/>
</dbReference>
<dbReference type="PDB" id="8BZ1">
    <property type="method" value="EM"/>
    <property type="resolution" value="3.80 A"/>
    <property type="chains" value="O=1-339"/>
</dbReference>
<dbReference type="PDB" id="8GXQ">
    <property type="method" value="EM"/>
    <property type="resolution" value="5.04 A"/>
    <property type="chains" value="DP=1-339"/>
</dbReference>
<dbReference type="PDB" id="8GXS">
    <property type="method" value="EM"/>
    <property type="resolution" value="4.16 A"/>
    <property type="chains" value="DP=1-339"/>
</dbReference>
<dbReference type="PDB" id="8ITY">
    <property type="method" value="EM"/>
    <property type="resolution" value="3.90 A"/>
    <property type="chains" value="U=1-339"/>
</dbReference>
<dbReference type="PDB" id="8IUE">
    <property type="method" value="EM"/>
    <property type="resolution" value="4.10 A"/>
    <property type="chains" value="U=1-339"/>
</dbReference>
<dbReference type="PDB" id="8IUH">
    <property type="method" value="EM"/>
    <property type="resolution" value="3.40 A"/>
    <property type="chains" value="U=1-339"/>
</dbReference>
<dbReference type="PDB" id="8S51">
    <property type="method" value="EM"/>
    <property type="resolution" value="3.10 A"/>
    <property type="chains" value="O=1-339"/>
</dbReference>
<dbReference type="PDB" id="8S52">
    <property type="method" value="EM"/>
    <property type="resolution" value="2.90 A"/>
    <property type="chains" value="O=1-339"/>
</dbReference>
<dbReference type="PDB" id="8S5N">
    <property type="method" value="EM"/>
    <property type="resolution" value="3.40 A"/>
    <property type="chains" value="O=1-339"/>
</dbReference>
<dbReference type="PDB" id="8WAK">
    <property type="method" value="EM"/>
    <property type="resolution" value="5.47 A"/>
    <property type="chains" value="P=1-339"/>
</dbReference>
<dbReference type="PDB" id="8WAL">
    <property type="method" value="EM"/>
    <property type="resolution" value="8.52 A"/>
    <property type="chains" value="P=1-339"/>
</dbReference>
<dbReference type="PDB" id="8WAN">
    <property type="method" value="EM"/>
    <property type="resolution" value="6.07 A"/>
    <property type="chains" value="P=1-339"/>
</dbReference>
<dbReference type="PDB" id="8WAO">
    <property type="method" value="EM"/>
    <property type="resolution" value="6.40 A"/>
    <property type="chains" value="P=1-339"/>
</dbReference>
<dbReference type="PDB" id="8WAP">
    <property type="method" value="EM"/>
    <property type="resolution" value="5.85 A"/>
    <property type="chains" value="P=1-339"/>
</dbReference>
<dbReference type="PDB" id="8WAQ">
    <property type="method" value="EM"/>
    <property type="resolution" value="6.29 A"/>
    <property type="chains" value="P=1-339"/>
</dbReference>
<dbReference type="PDB" id="8WAR">
    <property type="method" value="EM"/>
    <property type="resolution" value="7.20 A"/>
    <property type="chains" value="P=1-339"/>
</dbReference>
<dbReference type="PDB" id="8WAS">
    <property type="method" value="EM"/>
    <property type="resolution" value="6.13 A"/>
    <property type="chains" value="P=1-339"/>
</dbReference>
<dbReference type="PDB" id="9FSO">
    <property type="method" value="EM"/>
    <property type="resolution" value="3.28 A"/>
    <property type="chains" value="R=159-339"/>
</dbReference>
<dbReference type="PDB" id="9FSP">
    <property type="method" value="EM"/>
    <property type="resolution" value="3.39 A"/>
    <property type="chains" value="R=159-339"/>
</dbReference>
<dbReference type="PDB" id="9FSQ">
    <property type="method" value="EM"/>
    <property type="resolution" value="3.51 A"/>
    <property type="chains" value="R=159-339"/>
</dbReference>
<dbReference type="PDB" id="9FSR">
    <property type="method" value="EM"/>
    <property type="resolution" value="3.76 A"/>
    <property type="chains" value="R=159-339"/>
</dbReference>
<dbReference type="PDB" id="9FSS">
    <property type="method" value="EM"/>
    <property type="resolution" value="4.14 A"/>
    <property type="chains" value="R=159-339"/>
</dbReference>
<dbReference type="PDBsum" id="1C9B"/>
<dbReference type="PDBsum" id="1CDW"/>
<dbReference type="PDBsum" id="1JFI"/>
<dbReference type="PDBsum" id="1NVP"/>
<dbReference type="PDBsum" id="1TGH"/>
<dbReference type="PDBsum" id="4ROC"/>
<dbReference type="PDBsum" id="4ROD"/>
<dbReference type="PDBsum" id="4ROE"/>
<dbReference type="PDBsum" id="5FUR"/>
<dbReference type="PDBsum" id="5IY6"/>
<dbReference type="PDBsum" id="5IY7"/>
<dbReference type="PDBsum" id="5IY8"/>
<dbReference type="PDBsum" id="5IY9"/>
<dbReference type="PDBsum" id="5IYA"/>
<dbReference type="PDBsum" id="5IYB"/>
<dbReference type="PDBsum" id="5IYC"/>
<dbReference type="PDBsum" id="5IYD"/>
<dbReference type="PDBsum" id="5N9G"/>
<dbReference type="PDBsum" id="6MZD"/>
<dbReference type="PDBsum" id="6MZL"/>
<dbReference type="PDBsum" id="6MZM"/>
<dbReference type="PDBsum" id="6O9L"/>
<dbReference type="PDBsum" id="7EDX"/>
<dbReference type="PDBsum" id="7EG7"/>
<dbReference type="PDBsum" id="7EG8"/>
<dbReference type="PDBsum" id="7EG9"/>
<dbReference type="PDBsum" id="7EGA"/>
<dbReference type="PDBsum" id="7EGB"/>
<dbReference type="PDBsum" id="7EGC"/>
<dbReference type="PDBsum" id="7EGD"/>
<dbReference type="PDBsum" id="7EGE"/>
<dbReference type="PDBsum" id="7EGF"/>
<dbReference type="PDBsum" id="7EGI"/>
<dbReference type="PDBsum" id="7EGJ"/>
<dbReference type="PDBsum" id="7ENA"/>
<dbReference type="PDBsum" id="7ENC"/>
<dbReference type="PDBsum" id="7LBM"/>
<dbReference type="PDBsum" id="7NVR"/>
<dbReference type="PDBsum" id="7NVS"/>
<dbReference type="PDBsum" id="7NVT"/>
<dbReference type="PDBsum" id="7NVU"/>
<dbReference type="PDBsum" id="7NVY"/>
<dbReference type="PDBsum" id="7NVZ"/>
<dbReference type="PDBsum" id="7NW0"/>
<dbReference type="PDBsum" id="7ZWC"/>
<dbReference type="PDBsum" id="7ZWD"/>
<dbReference type="PDBsum" id="7ZX7"/>
<dbReference type="PDBsum" id="7ZX8"/>
<dbReference type="PDBsum" id="7ZXE"/>
<dbReference type="PDBsum" id="8BVW"/>
<dbReference type="PDBsum" id="8BYQ"/>
<dbReference type="PDBsum" id="8BZ1"/>
<dbReference type="PDBsum" id="8GXQ"/>
<dbReference type="PDBsum" id="8GXS"/>
<dbReference type="PDBsum" id="8ITY"/>
<dbReference type="PDBsum" id="8IUE"/>
<dbReference type="PDBsum" id="8IUH"/>
<dbReference type="PDBsum" id="8S51"/>
<dbReference type="PDBsum" id="8S52"/>
<dbReference type="PDBsum" id="8S5N"/>
<dbReference type="PDBsum" id="8WAK"/>
<dbReference type="PDBsum" id="8WAL"/>
<dbReference type="PDBsum" id="8WAN"/>
<dbReference type="PDBsum" id="8WAO"/>
<dbReference type="PDBsum" id="8WAP"/>
<dbReference type="PDBsum" id="8WAQ"/>
<dbReference type="PDBsum" id="8WAR"/>
<dbReference type="PDBsum" id="8WAS"/>
<dbReference type="PDBsum" id="9FSO"/>
<dbReference type="PDBsum" id="9FSP"/>
<dbReference type="PDBsum" id="9FSQ"/>
<dbReference type="PDBsum" id="9FSR"/>
<dbReference type="PDBsum" id="9FSS"/>
<dbReference type="EMDB" id="EMD-12610"/>
<dbReference type="EMDB" id="EMD-12611"/>
<dbReference type="EMDB" id="EMD-12612"/>
<dbReference type="EMDB" id="EMD-12613"/>
<dbReference type="EMDB" id="EMD-12617"/>
<dbReference type="EMDB" id="EMD-12618"/>
<dbReference type="EMDB" id="EMD-12619"/>
<dbReference type="EMDB" id="EMD-14996"/>
<dbReference type="EMDB" id="EMD-14997"/>
<dbReference type="EMDB" id="EMD-15006"/>
<dbReference type="EMDB" id="EMD-15007"/>
<dbReference type="EMDB" id="EMD-15009"/>
<dbReference type="EMDB" id="EMD-16274"/>
<dbReference type="EMDB" id="EMD-16331"/>
<dbReference type="EMDB" id="EMD-16335"/>
<dbReference type="EMDB" id="EMD-19718"/>
<dbReference type="EMDB" id="EMD-19719"/>
<dbReference type="EMDB" id="EMD-19743"/>
<dbReference type="EMDB" id="EMD-23255"/>
<dbReference type="EMDB" id="EMD-31075"/>
<dbReference type="EMDB" id="EMD-31107"/>
<dbReference type="EMDB" id="EMD-31108"/>
<dbReference type="EMDB" id="EMD-31109"/>
<dbReference type="EMDB" id="EMD-31110"/>
<dbReference type="EMDB" id="EMD-31111"/>
<dbReference type="EMDB" id="EMD-31112"/>
<dbReference type="EMDB" id="EMD-31113"/>
<dbReference type="EMDB" id="EMD-31114"/>
<dbReference type="EMDB" id="EMD-31115"/>
<dbReference type="EMDB" id="EMD-31118"/>
<dbReference type="EMDB" id="EMD-31119"/>
<dbReference type="EMDB" id="EMD-31204"/>
<dbReference type="EMDB" id="EMD-31207"/>
<dbReference type="EMDB" id="EMD-3307"/>
<dbReference type="EMDB" id="EMD-34359"/>
<dbReference type="EMDB" id="EMD-34360"/>
<dbReference type="EMDB" id="EMD-35712"/>
<dbReference type="EMDB" id="EMD-35719"/>
<dbReference type="EMDB" id="EMD-35722"/>
<dbReference type="EMDB" id="EMD-37395"/>
<dbReference type="EMDB" id="EMD-37396"/>
<dbReference type="EMDB" id="EMD-37398"/>
<dbReference type="EMDB" id="EMD-37399"/>
<dbReference type="EMDB" id="EMD-37400"/>
<dbReference type="EMDB" id="EMD-37401"/>
<dbReference type="EMDB" id="EMD-37402"/>
<dbReference type="EMDB" id="EMD-37403"/>
<dbReference type="EMDB" id="EMD-50730"/>
<dbReference type="EMDB" id="EMD-50731"/>
<dbReference type="EMDB" id="EMD-50732"/>
<dbReference type="EMDB" id="EMD-50733"/>
<dbReference type="EMDB" id="EMD-50734"/>
<dbReference type="EMDB" id="EMD-8132"/>
<dbReference type="EMDB" id="EMD-8133"/>
<dbReference type="EMDB" id="EMD-8134"/>
<dbReference type="EMDB" id="EMD-8135"/>
<dbReference type="EMDB" id="EMD-8136"/>
<dbReference type="EMDB" id="EMD-8137"/>
<dbReference type="EMDB" id="EMD-8138"/>
<dbReference type="EMDB" id="EMD-9302"/>
<dbReference type="EMDB" id="EMD-9305"/>
<dbReference type="EMDB" id="EMD-9306"/>
<dbReference type="SMR" id="P20226"/>
<dbReference type="BioGRID" id="112771">
    <property type="interactions" value="263"/>
</dbReference>
<dbReference type="ComplexPortal" id="CPX-2396">
    <property type="entry name" value="General transcription factor TFIII3B complex, BRF1 variant"/>
</dbReference>
<dbReference type="ComplexPortal" id="CPX-2397">
    <property type="entry name" value="General transcription factor TFIII3B complex, BRF2 variant"/>
</dbReference>
<dbReference type="ComplexPortal" id="CPX-2398">
    <property type="entry name" value="General transcription factor TFIIB-TBP complex"/>
</dbReference>
<dbReference type="ComplexPortal" id="CPX-7978">
    <property type="entry name" value="RNA polymerase I selectivity factor 1 complex"/>
</dbReference>
<dbReference type="ComplexPortal" id="CPX-915">
    <property type="entry name" value="General transcription factor complex TFIID"/>
</dbReference>
<dbReference type="ComplexPortal" id="CPX-930">
    <property type="entry name" value="General transcription factor complex TFIID, TAF4B variant"/>
</dbReference>
<dbReference type="CORUM" id="P20226"/>
<dbReference type="DIP" id="DIP-1078N"/>
<dbReference type="FunCoup" id="P20226">
    <property type="interactions" value="3710"/>
</dbReference>
<dbReference type="IntAct" id="P20226">
    <property type="interactions" value="156"/>
</dbReference>
<dbReference type="MINT" id="P20226"/>
<dbReference type="STRING" id="9606.ENSP00000230354"/>
<dbReference type="GlyCosmos" id="P20226">
    <property type="glycosylation" value="1 site, 1 glycan"/>
</dbReference>
<dbReference type="GlyGen" id="P20226">
    <property type="glycosylation" value="4 sites, 1 O-linked glycan (1 site)"/>
</dbReference>
<dbReference type="iPTMnet" id="P20226"/>
<dbReference type="PhosphoSitePlus" id="P20226"/>
<dbReference type="SwissPalm" id="P20226"/>
<dbReference type="BioMuta" id="TBP"/>
<dbReference type="DMDM" id="1351223"/>
<dbReference type="jPOST" id="P20226"/>
<dbReference type="MassIVE" id="P20226"/>
<dbReference type="PaxDb" id="9606-ENSP00000375942"/>
<dbReference type="PeptideAtlas" id="P20226"/>
<dbReference type="ProteomicsDB" id="27699"/>
<dbReference type="ProteomicsDB" id="53733">
    <molecule id="P20226-1"/>
</dbReference>
<dbReference type="Pumba" id="P20226"/>
<dbReference type="Antibodypedia" id="4001">
    <property type="antibodies" value="610 antibodies from 44 providers"/>
</dbReference>
<dbReference type="DNASU" id="6908"/>
<dbReference type="Ensembl" id="ENST00000230354.10">
    <molecule id="P20226-1"/>
    <property type="protein sequence ID" value="ENSP00000230354.5"/>
    <property type="gene ID" value="ENSG00000112592.15"/>
</dbReference>
<dbReference type="Ensembl" id="ENST00000392092.7">
    <molecule id="P20226-1"/>
    <property type="protein sequence ID" value="ENSP00000375942.2"/>
    <property type="gene ID" value="ENSG00000112592.15"/>
</dbReference>
<dbReference type="Ensembl" id="ENST00000540980.5">
    <molecule id="P20226-2"/>
    <property type="protein sequence ID" value="ENSP00000442132.1"/>
    <property type="gene ID" value="ENSG00000112592.15"/>
</dbReference>
<dbReference type="GeneID" id="6908"/>
<dbReference type="KEGG" id="hsa:6908"/>
<dbReference type="MANE-Select" id="ENST00000392092.7">
    <property type="protein sequence ID" value="ENSP00000375942.2"/>
    <property type="RefSeq nucleotide sequence ID" value="NM_003194.5"/>
    <property type="RefSeq protein sequence ID" value="NP_003185.1"/>
</dbReference>
<dbReference type="UCSC" id="uc003qxt.4">
    <molecule id="P20226-1"/>
    <property type="organism name" value="human"/>
</dbReference>
<dbReference type="AGR" id="HGNC:11588"/>
<dbReference type="CTD" id="6908"/>
<dbReference type="DisGeNET" id="6908"/>
<dbReference type="GeneCards" id="TBP"/>
<dbReference type="GeneReviews" id="TBP"/>
<dbReference type="HGNC" id="HGNC:11588">
    <property type="gene designation" value="TBP"/>
</dbReference>
<dbReference type="HPA" id="ENSG00000112592">
    <property type="expression patterns" value="Low tissue specificity"/>
</dbReference>
<dbReference type="MalaCards" id="TBP"/>
<dbReference type="MIM" id="600075">
    <property type="type" value="gene"/>
</dbReference>
<dbReference type="MIM" id="607136">
    <property type="type" value="phenotype"/>
</dbReference>
<dbReference type="neXtProt" id="NX_P20226"/>
<dbReference type="OpenTargets" id="ENSG00000112592"/>
<dbReference type="Orphanet" id="98759">
    <property type="disease" value="Spinocerebellar ataxia type 17"/>
</dbReference>
<dbReference type="PharmGKB" id="PA36352"/>
<dbReference type="VEuPathDB" id="HostDB:ENSG00000112592"/>
<dbReference type="eggNOG" id="KOG3302">
    <property type="taxonomic scope" value="Eukaryota"/>
</dbReference>
<dbReference type="GeneTree" id="ENSGT00940000157474"/>
<dbReference type="InParanoid" id="P20226"/>
<dbReference type="OMA" id="NMDQNNS"/>
<dbReference type="OrthoDB" id="2127950at2759"/>
<dbReference type="PAN-GO" id="P20226">
    <property type="GO annotations" value="2 GO annotations based on evolutionary models"/>
</dbReference>
<dbReference type="PhylomeDB" id="P20226"/>
<dbReference type="TreeFam" id="TF300102"/>
<dbReference type="PathwayCommons" id="P20226"/>
<dbReference type="Reactome" id="R-HSA-167161">
    <property type="pathway name" value="HIV Transcription Initiation"/>
</dbReference>
<dbReference type="Reactome" id="R-HSA-167162">
    <property type="pathway name" value="RNA Polymerase II HIV Promoter Escape"/>
</dbReference>
<dbReference type="Reactome" id="R-HSA-167172">
    <property type="pathway name" value="Transcription of the HIV genome"/>
</dbReference>
<dbReference type="Reactome" id="R-HSA-427359">
    <property type="pathway name" value="SIRT1 negatively regulates rRNA expression"/>
</dbReference>
<dbReference type="Reactome" id="R-HSA-427413">
    <property type="pathway name" value="NoRC negatively regulates rRNA expression"/>
</dbReference>
<dbReference type="Reactome" id="R-HSA-5250924">
    <property type="pathway name" value="B-WICH complex positively regulates rRNA expression"/>
</dbReference>
<dbReference type="Reactome" id="R-HSA-674695">
    <property type="pathway name" value="RNA Polymerase II Pre-transcription Events"/>
</dbReference>
<dbReference type="Reactome" id="R-HSA-6804756">
    <property type="pathway name" value="Regulation of TP53 Activity through Phosphorylation"/>
</dbReference>
<dbReference type="Reactome" id="R-HSA-6807505">
    <property type="pathway name" value="RNA polymerase II transcribes snRNA genes"/>
</dbReference>
<dbReference type="Reactome" id="R-HSA-73762">
    <property type="pathway name" value="RNA Polymerase I Transcription Initiation"/>
</dbReference>
<dbReference type="Reactome" id="R-HSA-73772">
    <property type="pathway name" value="RNA Polymerase I Promoter Escape"/>
</dbReference>
<dbReference type="Reactome" id="R-HSA-73776">
    <property type="pathway name" value="RNA Polymerase II Promoter Escape"/>
</dbReference>
<dbReference type="Reactome" id="R-HSA-73779">
    <property type="pathway name" value="RNA Polymerase II Transcription Pre-Initiation And Promoter Opening"/>
</dbReference>
<dbReference type="Reactome" id="R-HSA-73863">
    <property type="pathway name" value="RNA Polymerase I Transcription Termination"/>
</dbReference>
<dbReference type="Reactome" id="R-HSA-749476">
    <property type="pathway name" value="RNA Polymerase III Abortive And Retractive Initiation"/>
</dbReference>
<dbReference type="Reactome" id="R-HSA-75953">
    <property type="pathway name" value="RNA Polymerase II Transcription Initiation"/>
</dbReference>
<dbReference type="Reactome" id="R-HSA-76042">
    <property type="pathway name" value="RNA Polymerase II Transcription Initiation And Promoter Clearance"/>
</dbReference>
<dbReference type="Reactome" id="R-HSA-76061">
    <property type="pathway name" value="RNA Polymerase III Transcription Initiation From Type 1 Promoter"/>
</dbReference>
<dbReference type="Reactome" id="R-HSA-76066">
    <property type="pathway name" value="RNA Polymerase III Transcription Initiation From Type 2 Promoter"/>
</dbReference>
<dbReference type="Reactome" id="R-HSA-76071">
    <property type="pathway name" value="RNA Polymerase III Transcription Initiation From Type 3 Promoter"/>
</dbReference>
<dbReference type="Reactome" id="R-HSA-9018519">
    <property type="pathway name" value="Estrogen-dependent gene expression"/>
</dbReference>
<dbReference type="SignaLink" id="P20226"/>
<dbReference type="SIGNOR" id="P20226"/>
<dbReference type="BioGRID-ORCS" id="6908">
    <property type="hits" value="356 hits in 1150 CRISPR screens"/>
</dbReference>
<dbReference type="CD-CODE" id="232F8A39">
    <property type="entry name" value="P-body"/>
</dbReference>
<dbReference type="CD-CODE" id="38EC0B30">
    <property type="entry name" value="Transcriptional condensate"/>
</dbReference>
<dbReference type="CD-CODE" id="A0DCDA94">
    <property type="entry name" value="DNA damage foci"/>
</dbReference>
<dbReference type="CD-CODE" id="DEE660B4">
    <property type="entry name" value="Stress granule"/>
</dbReference>
<dbReference type="EvolutionaryTrace" id="P20226"/>
<dbReference type="GeneWiki" id="TATA-binding_protein"/>
<dbReference type="GenomeRNAi" id="6908"/>
<dbReference type="Pharos" id="P20226">
    <property type="development level" value="Tbio"/>
</dbReference>
<dbReference type="PRO" id="PR:P20226"/>
<dbReference type="Proteomes" id="UP000005640">
    <property type="component" value="Chromosome 6"/>
</dbReference>
<dbReference type="RNAct" id="P20226">
    <property type="molecule type" value="protein"/>
</dbReference>
<dbReference type="Bgee" id="ENSG00000112592">
    <property type="expression patterns" value="Expressed in left testis and 153 other cell types or tissues"/>
</dbReference>
<dbReference type="ExpressionAtlas" id="P20226">
    <property type="expression patterns" value="baseline and differential"/>
</dbReference>
<dbReference type="GO" id="GO:0000785">
    <property type="term" value="C:chromatin"/>
    <property type="evidence" value="ECO:0000314"/>
    <property type="project" value="ARUK-UCL"/>
</dbReference>
<dbReference type="GO" id="GO:0005829">
    <property type="term" value="C:cytosol"/>
    <property type="evidence" value="ECO:0000314"/>
    <property type="project" value="HPA"/>
</dbReference>
<dbReference type="GO" id="GO:0000791">
    <property type="term" value="C:euchromatin"/>
    <property type="evidence" value="ECO:0000314"/>
    <property type="project" value="BHF-UCL"/>
</dbReference>
<dbReference type="GO" id="GO:0001674">
    <property type="term" value="C:female germ cell nucleus"/>
    <property type="evidence" value="ECO:0007669"/>
    <property type="project" value="Ensembl"/>
</dbReference>
<dbReference type="GO" id="GO:0001939">
    <property type="term" value="C:female pronucleus"/>
    <property type="evidence" value="ECO:0007669"/>
    <property type="project" value="Ensembl"/>
</dbReference>
<dbReference type="GO" id="GO:0001673">
    <property type="term" value="C:male germ cell nucleus"/>
    <property type="evidence" value="ECO:0007669"/>
    <property type="project" value="Ensembl"/>
</dbReference>
<dbReference type="GO" id="GO:0001940">
    <property type="term" value="C:male pronucleus"/>
    <property type="evidence" value="ECO:0007669"/>
    <property type="project" value="Ensembl"/>
</dbReference>
<dbReference type="GO" id="GO:0005654">
    <property type="term" value="C:nucleoplasm"/>
    <property type="evidence" value="ECO:0000314"/>
    <property type="project" value="HPA"/>
</dbReference>
<dbReference type="GO" id="GO:0005634">
    <property type="term" value="C:nucleus"/>
    <property type="evidence" value="ECO:0000314"/>
    <property type="project" value="UniProtKB"/>
</dbReference>
<dbReference type="GO" id="GO:0032991">
    <property type="term" value="C:protein-containing complex"/>
    <property type="evidence" value="ECO:0000315"/>
    <property type="project" value="CAFA"/>
</dbReference>
<dbReference type="GO" id="GO:0005668">
    <property type="term" value="C:RNA polymerase transcription factor SL1 complex"/>
    <property type="evidence" value="ECO:0000314"/>
    <property type="project" value="UniProtKB"/>
</dbReference>
<dbReference type="GO" id="GO:0005672">
    <property type="term" value="C:transcription factor TFIIA complex"/>
    <property type="evidence" value="ECO:0000314"/>
    <property type="project" value="BHF-UCL"/>
</dbReference>
<dbReference type="GO" id="GO:0005669">
    <property type="term" value="C:transcription factor TFIID complex"/>
    <property type="evidence" value="ECO:0000314"/>
    <property type="project" value="UniProtKB"/>
</dbReference>
<dbReference type="GO" id="GO:0017162">
    <property type="term" value="F:aryl hydrocarbon receptor binding"/>
    <property type="evidence" value="ECO:0000353"/>
    <property type="project" value="CAFA"/>
</dbReference>
<dbReference type="GO" id="GO:0001046">
    <property type="term" value="F:core promoter sequence-specific DNA binding"/>
    <property type="evidence" value="ECO:0000314"/>
    <property type="project" value="CAFA"/>
</dbReference>
<dbReference type="GO" id="GO:0140297">
    <property type="term" value="F:DNA-binding transcription factor binding"/>
    <property type="evidence" value="ECO:0000353"/>
    <property type="project" value="UniProtKB"/>
</dbReference>
<dbReference type="GO" id="GO:0019899">
    <property type="term" value="F:enzyme binding"/>
    <property type="evidence" value="ECO:0000353"/>
    <property type="project" value="BHF-UCL"/>
</dbReference>
<dbReference type="GO" id="GO:0001164">
    <property type="term" value="F:RNA polymerase I core promoter sequence-specific DNA binding"/>
    <property type="evidence" value="ECO:0000314"/>
    <property type="project" value="UniProtKB"/>
</dbReference>
<dbReference type="GO" id="GO:0000978">
    <property type="term" value="F:RNA polymerase II cis-regulatory region sequence-specific DNA binding"/>
    <property type="evidence" value="ECO:0007669"/>
    <property type="project" value="Ensembl"/>
</dbReference>
<dbReference type="GO" id="GO:0000979">
    <property type="term" value="F:RNA polymerase II core promoter sequence-specific DNA binding"/>
    <property type="evidence" value="ECO:0000314"/>
    <property type="project" value="ARUK-UCL"/>
</dbReference>
<dbReference type="GO" id="GO:0016251">
    <property type="term" value="F:RNA polymerase II general transcription initiation factor activity"/>
    <property type="evidence" value="ECO:0000314"/>
    <property type="project" value="ARUK-UCL"/>
</dbReference>
<dbReference type="GO" id="GO:0001091">
    <property type="term" value="F:RNA polymerase II general transcription initiation factor binding"/>
    <property type="evidence" value="ECO:0000353"/>
    <property type="project" value="ARUK-UCL"/>
</dbReference>
<dbReference type="GO" id="GO:0000995">
    <property type="term" value="F:RNA polymerase III general transcription initiation factor activity"/>
    <property type="evidence" value="ECO:0000315"/>
    <property type="project" value="UniProtKB"/>
</dbReference>
<dbReference type="GO" id="GO:0001093">
    <property type="term" value="F:TFIIB-class transcription factor binding"/>
    <property type="evidence" value="ECO:0000353"/>
    <property type="project" value="CAFA"/>
</dbReference>
<dbReference type="GO" id="GO:0000976">
    <property type="term" value="F:transcription cis-regulatory region binding"/>
    <property type="evidence" value="ECO:0000314"/>
    <property type="project" value="UniProtKB"/>
</dbReference>
<dbReference type="GO" id="GO:0006352">
    <property type="term" value="P:DNA-templated transcription initiation"/>
    <property type="evidence" value="ECO:0000318"/>
    <property type="project" value="GO_Central"/>
</dbReference>
<dbReference type="GO" id="GO:0042789">
    <property type="term" value="P:mRNA transcription by RNA polymerase II"/>
    <property type="evidence" value="ECO:0000314"/>
    <property type="project" value="ComplexPortal"/>
</dbReference>
<dbReference type="GO" id="GO:0060261">
    <property type="term" value="P:positive regulation of transcription initiation by RNA polymerase II"/>
    <property type="evidence" value="ECO:0000314"/>
    <property type="project" value="ComplexPortal"/>
</dbReference>
<dbReference type="GO" id="GO:0051123">
    <property type="term" value="P:RNA polymerase II preinitiation complex assembly"/>
    <property type="evidence" value="ECO:0000314"/>
    <property type="project" value="CAFA"/>
</dbReference>
<dbReference type="GO" id="GO:0007283">
    <property type="term" value="P:spermatogenesis"/>
    <property type="evidence" value="ECO:0007669"/>
    <property type="project" value="Ensembl"/>
</dbReference>
<dbReference type="GO" id="GO:0006366">
    <property type="term" value="P:transcription by RNA polymerase II"/>
    <property type="evidence" value="ECO:0000314"/>
    <property type="project" value="BHF-UCL"/>
</dbReference>
<dbReference type="GO" id="GO:0006383">
    <property type="term" value="P:transcription by RNA polymerase III"/>
    <property type="evidence" value="ECO:0000314"/>
    <property type="project" value="MGI"/>
</dbReference>
<dbReference type="GO" id="GO:0006367">
    <property type="term" value="P:transcription initiation at RNA polymerase II promoter"/>
    <property type="evidence" value="ECO:0000304"/>
    <property type="project" value="ProtInc"/>
</dbReference>
<dbReference type="CDD" id="cd04516">
    <property type="entry name" value="TBP_eukaryotes"/>
    <property type="match status" value="1"/>
</dbReference>
<dbReference type="FunFam" id="3.30.310.10:FF:000001">
    <property type="entry name" value="TATA-box-binding protein 2"/>
    <property type="match status" value="1"/>
</dbReference>
<dbReference type="FunFam" id="3.30.310.10:FF:000002">
    <property type="entry name" value="TATA-box-binding protein 2"/>
    <property type="match status" value="1"/>
</dbReference>
<dbReference type="Gene3D" id="3.30.310.10">
    <property type="entry name" value="TATA-Binding Protein"/>
    <property type="match status" value="2"/>
</dbReference>
<dbReference type="HAMAP" id="MF_00408">
    <property type="entry name" value="TATA_bind_prot_arch"/>
    <property type="match status" value="1"/>
</dbReference>
<dbReference type="IDEAL" id="IID00367"/>
<dbReference type="InterPro" id="IPR000814">
    <property type="entry name" value="TBP"/>
</dbReference>
<dbReference type="InterPro" id="IPR030491">
    <property type="entry name" value="TBP_CS"/>
</dbReference>
<dbReference type="InterPro" id="IPR012295">
    <property type="entry name" value="TBP_dom_sf"/>
</dbReference>
<dbReference type="InterPro" id="IPR033710">
    <property type="entry name" value="TBP_eukaryotic"/>
</dbReference>
<dbReference type="PANTHER" id="PTHR10126">
    <property type="entry name" value="TATA-BOX BINDING PROTEIN"/>
    <property type="match status" value="1"/>
</dbReference>
<dbReference type="Pfam" id="PF00352">
    <property type="entry name" value="TBP"/>
    <property type="match status" value="2"/>
</dbReference>
<dbReference type="PRINTS" id="PR00686">
    <property type="entry name" value="TIFACTORIID"/>
</dbReference>
<dbReference type="SUPFAM" id="SSF55945">
    <property type="entry name" value="TATA-box binding protein-like"/>
    <property type="match status" value="2"/>
</dbReference>
<dbReference type="PROSITE" id="PS00351">
    <property type="entry name" value="TFIID"/>
    <property type="match status" value="2"/>
</dbReference>
<comment type="function">
    <text evidence="15 17 18 19 20 21 22 24 33">The TFIID basal transcription factor complex plays a major role in the initiation of RNA polymerase II (Pol II)-dependent transcription (PubMed:33795473). TFIID recognizes and binds promoters with or without a TATA box via its subunit TBP, a TATA-box-binding protein, and promotes assembly of the pre-initiation complex (PIC) (PubMed:2194289, PubMed:2363050, PubMed:2374612, PubMed:27193682, PubMed:33795473). The TFIID complex consists of TBP and TBP-associated factors (TAFs), including TAF1, TAF2, TAF3, TAF4, TAF5, TAF6, TAF7, TAF8, TAF9, TAF10, TAF11, TAF12 and TAF13 (PubMed:27007846, PubMed:33795473). The TFIID complex structure can be divided into 3 modules TFIID-A, TFIID-B, and TFIID-C (PubMed:33795473). TBP forms the TFIID-A module together with TAF3 and TAF5 (PubMed:33795473). TBP is a general transcription factor that functions at the core of the TFIID complex (PubMed:2194289, PubMed:2363050, PubMed:2374612, PubMed:27193682, PubMed:33795473, PubMed:9836642). During assembly of the core PIC on the promoter, as part of TFIID, TBP binds to and also bends promoter DNA, irrespective of whether the promoter contains a TATA box (PubMed:33795473). Component of a BRF2-containing transcription factor complex that regulates transcription mediated by RNA polymerase III (PubMed:26638071). Component of the transcription factor SL1/TIF-IB complex, which is involved in the assembly of the PIC during RNA polymerase I-dependent transcription (PubMed:15970593). The rate of PIC formation probably is primarily dependent on the rate of association of SL1 with the rDNA promoter (PubMed:15970593). SL1 is involved in stabilization of nucleolar transcription factor 1/UBTF on rDNA (PubMed:15970593).</text>
</comment>
<comment type="subunit">
    <text evidence="1 3 4 5 6 7 10 11 13 17 19 20 21 22 24 26 27 31 32 33">Binds DNA as monomer (PubMed:2194289, PubMed:2374612). Component of the TFIID basal transcription factor complex, composed of TATA-box-binding protein TBP, and a number of TBP-associated factors (TAFs), including TAF1, TAF2, TAF3, TAF4, TAF5, TAF6, TAF7, TAF8, TAF9, TAF10, TAF11, TAF12 and TAF13 (PubMed:27007846, PubMed:33795473, PubMed:9836642). Part of a TFIID-containing RNA polymerase II pre-initiation complex that is composed of TBP and at least GTF2A1, GTF2A2, GTF2E1, GTF2E2, GTF2F1, GTF2H2, GTF2H3, GTF2H4, GTF2H5, GTF2B, TCEA1, ERCC2, ERCC3, TAF1, TAF2, TAF3, TAF4, TAF5, TAF6, TAF7, TAF8, TAF9, TAF10, TAF11, TAF12 and TAF13 (PubMed:27007846, PubMed:27193682, PubMed:33795473). Component of the transcription factor SL1/TIF-IB complex, composed of TBP and at least TAF1A, TAF1B, TAF1C and TAF1D (PubMed:7801123). Association of TBP to form either TFIID or SL1/TIF-IB appears to be mutually exclusive (PubMed:7801123). Interacts with TAF1A, TAF1B and TAF1C (PubMed:7801123). Interacts with TFIIB, NCOA6, DRAP1, DR1 and ELF3 (PubMed:10391676, PubMed:10567404, PubMed:11461703). Interacts with SPIB, SNAPC1, SNAPC2 and SNAPC4 (PubMed:10196196, PubMed:12621023). Interacts with UTF1 (PubMed:9748258). Interacts with BRF2; this interaction promotes recruitment of BRF2 to TATA box-containing promoters (PubMed:11564744, PubMed:26638071). Interacts with UBTFD (PubMed:7982918). Interacts with GPBP1D (By similarity). Interacts with CITED2 (By similarity). Interacts with ATF7IP (Probable). Interacts with LLPH (By similarity). Interacts with HSF1 (via transactivation domain) (PubMed:11005381). Interacts with GTF2B (via C-terminus); this interaction with promoter-bound TBP guides RNA polymerase II into the pre-initiation complex (PIC) (PubMed:8504927). Interacts with PAX5 (PubMed:10197586). Interacts with MSX1; the interaction may inhibit MSX1 autoinactivation (By similarity).</text>
</comment>
<comment type="subunit">
    <text evidence="14 25 28">(Microbial infection) Interacts with HIV-1 Tat.</text>
</comment>
<comment type="subunit">
    <text evidence="30">(Microbial infection) Interacts with herpes simplex virus 1 ICP4.</text>
</comment>
<comment type="subunit">
    <text evidence="23">(Microbial infection) Interacts with herpes simplex virus 2 ICP4.</text>
</comment>
<comment type="subunit">
    <text evidence="29">(Microbial infection) Interacts with human adenovirus E1A protein; this interaction probably disrupts the TBP-TATA complex.</text>
</comment>
<comment type="interaction">
    <interactant intactId="EBI-355371">
        <id>P20226</id>
    </interactant>
    <interactant intactId="EBI-77613">
        <id>P05067</id>
        <label>APP</label>
    </interactant>
    <organismsDiffer>false</organismsDiffer>
    <experiments>3</experiments>
</comment>
<comment type="interaction">
    <interactant intactId="EBI-355371">
        <id>P20226</id>
    </interactant>
    <interactant intactId="EBI-949861">
        <id>Q92994</id>
        <label>BRF1</label>
    </interactant>
    <organismsDiffer>false</organismsDiffer>
    <experiments>3</experiments>
</comment>
<comment type="interaction">
    <interactant intactId="EBI-355371">
        <id>P20226</id>
    </interactant>
    <interactant intactId="EBI-1041567">
        <id>Q00535</id>
        <label>CDK5</label>
    </interactant>
    <organismsDiffer>false</organismsDiffer>
    <experiments>3</experiments>
</comment>
<comment type="interaction">
    <interactant intactId="EBI-355371">
        <id>P20226</id>
    </interactant>
    <interactant intactId="EBI-781310">
        <id>O60869-1</id>
        <label>EDF1</label>
    </interactant>
    <organismsDiffer>false</organismsDiffer>
    <experiments>2</experiments>
</comment>
<comment type="interaction">
    <interactant intactId="EBI-355371">
        <id>P20226</id>
    </interactant>
    <interactant intactId="EBI-389518">
        <id>P52655</id>
        <label>GTF2A1</label>
    </interactant>
    <organismsDiffer>false</organismsDiffer>
    <experiments>5</experiments>
</comment>
<comment type="interaction">
    <interactant intactId="EBI-355371">
        <id>P20226</id>
    </interactant>
    <interactant intactId="EBI-1045262">
        <id>P52657</id>
        <label>GTF2A2</label>
    </interactant>
    <organismsDiffer>false</organismsDiffer>
    <experiments>3</experiments>
</comment>
<comment type="interaction">
    <interactant intactId="EBI-355371">
        <id>P20226</id>
    </interactant>
    <interactant intactId="EBI-389564">
        <id>Q00403</id>
        <label>GTF2B</label>
    </interactant>
    <organismsDiffer>false</organismsDiffer>
    <experiments>2</experiments>
</comment>
<comment type="interaction">
    <interactant intactId="EBI-355371">
        <id>P20226</id>
    </interactant>
    <interactant intactId="EBI-2007911">
        <id>Q16236</id>
        <label>NFE2L2</label>
    </interactant>
    <organismsDiffer>false</organismsDiffer>
    <experiments>5</experiments>
</comment>
<comment type="interaction">
    <interactant intactId="EBI-355371">
        <id>P20226</id>
    </interactant>
    <interactant intactId="EBI-1167176">
        <id>P20265</id>
        <label>POU3F2</label>
    </interactant>
    <organismsDiffer>false</organismsDiffer>
    <experiments>2</experiments>
</comment>
<comment type="interaction">
    <interactant intactId="EBI-355371">
        <id>P20226</id>
    </interactant>
    <interactant intactId="EBI-1053182">
        <id>Q01105</id>
        <label>SET</label>
    </interactant>
    <organismsDiffer>false</organismsDiffer>
    <experiments>4</experiments>
</comment>
<comment type="interaction">
    <interactant intactId="EBI-355371">
        <id>P20226</id>
    </interactant>
    <interactant intactId="EBI-491289">
        <id>P21675</id>
        <label>TAF1</label>
    </interactant>
    <organismsDiffer>false</organismsDiffer>
    <experiments>11</experiments>
</comment>
<comment type="interaction">
    <interactant intactId="EBI-355371">
        <id>P20226</id>
    </interactant>
    <interactant intactId="EBI-1034238">
        <id>Q16514</id>
        <label>TAF12</label>
    </interactant>
    <organismsDiffer>false</organismsDiffer>
    <experiments>5</experiments>
</comment>
<comment type="interaction">
    <interactant intactId="EBI-355371">
        <id>P20226</id>
    </interactant>
    <interactant intactId="EBI-2510647">
        <id>Q15573</id>
        <label>TAF1A</label>
    </interactant>
    <organismsDiffer>false</organismsDiffer>
    <experiments>4</experiments>
</comment>
<comment type="interaction">
    <interactant intactId="EBI-355371">
        <id>P20226</id>
    </interactant>
    <interactant intactId="EBI-1560239">
        <id>Q53T94</id>
        <label>TAF1B</label>
    </interactant>
    <organismsDiffer>false</organismsDiffer>
    <experiments>5</experiments>
</comment>
<comment type="interaction">
    <interactant intactId="EBI-355371">
        <id>P20226</id>
    </interactant>
    <interactant intactId="EBI-2510659">
        <id>Q15572</id>
        <label>TAF1C</label>
    </interactant>
    <organismsDiffer>false</organismsDiffer>
    <experiments>3</experiments>
</comment>
<comment type="interaction">
    <interactant intactId="EBI-355371">
        <id>P20226</id>
    </interactant>
    <interactant intactId="EBI-366083">
        <id>P04637</id>
        <label>TP53</label>
    </interactant>
    <organismsDiffer>false</organismsDiffer>
    <experiments>2</experiments>
</comment>
<comment type="interaction">
    <interactant intactId="EBI-355371">
        <id>P20226</id>
    </interactant>
    <interactant intactId="EBI-21005290">
        <id>P18111</id>
        <label>Cdx1</label>
    </interactant>
    <organismsDiffer>true</organismsDiffer>
    <experiments>5</experiments>
</comment>
<comment type="interaction">
    <interactant intactId="EBI-355371">
        <id>P20226</id>
    </interactant>
    <interactant intactId="EBI-11712595">
        <id>P87662</id>
        <label>ICP0</label>
    </interactant>
    <organismsDiffer>true</organismsDiffer>
    <experiments>2</experiments>
</comment>
<comment type="interaction">
    <interactant intactId="EBI-355371">
        <id>P20226</id>
    </interactant>
    <interactant intactId="EBI-11712334">
        <id>L8B1Q7</id>
        <label>ORF6</label>
    </interactant>
    <organismsDiffer>true</organismsDiffer>
    <experiments>3</experiments>
</comment>
<comment type="interaction">
    <interactant intactId="EBI-355371">
        <id>P20226</id>
    </interactant>
    <interactant intactId="EBI-92180">
        <id>P28159</id>
        <label>Su(H)</label>
    </interactant>
    <organismsDiffer>true</organismsDiffer>
    <experiments>2</experiments>
</comment>
<comment type="interaction">
    <interactant intactId="EBI-355371">
        <id>P20226</id>
    </interactant>
    <interactant intactId="EBI-11702805">
        <id>Q05906</id>
        <label>UL3</label>
    </interactant>
    <organismsDiffer>true</organismsDiffer>
    <experiments>4</experiments>
</comment>
<comment type="interaction">
    <interactant intactId="EBI-12516310">
        <id>P20226-1</id>
    </interactant>
    <interactant intactId="EBI-11702772">
        <id>P17473</id>
        <label>IE</label>
    </interactant>
    <organismsDiffer>true</organismsDiffer>
    <experiments>2</experiments>
</comment>
<comment type="subcellular location">
    <subcellularLocation>
        <location evidence="21">Nucleus</location>
    </subcellularLocation>
</comment>
<comment type="alternative products">
    <event type="alternative splicing"/>
    <isoform>
        <id>P20226-1</id>
        <name>1</name>
        <sequence type="displayed"/>
    </isoform>
    <isoform>
        <id>P20226-2</id>
        <name>2</name>
        <sequence type="described" ref="VSP_045488"/>
    </isoform>
</comment>
<comment type="tissue specificity">
    <text evidence="16">Widely expressed, with levels highest in the testis and ovary.</text>
</comment>
<comment type="polymorphism">
    <text>The poly-Gln region of TBP is highly polymorphic (25 to 42 repeats) in normal individuals and is expanded to about 47-63 repeats in spinocerebellar ataxia 17 (SCA17) patients.</text>
</comment>
<comment type="disease" evidence="8 9 12">
    <disease id="DI-01079">
        <name>Spinocerebellar ataxia 17</name>
        <acronym>SCA17</acronym>
        <description>Spinocerebellar ataxia is a clinically and genetically heterogeneous group of cerebellar disorders. Patients show progressive incoordination of gait and often poor coordination of hands, speech and eye movements, due to degeneration of the cerebellum with variable involvement of the brainstem and spinal cord. SCA17 is an autosomal dominant cerebellar ataxia (ADCA) characterized by widespread cerebral and cerebellar atrophy, dementia and extrapyramidal signs. The molecular defect in SCA17 is the expansion of a CAG repeat in the coding region of TBP. Longer expansions result in earlier onset and more severe clinical manifestations of the disease.</description>
        <dbReference type="MIM" id="607136"/>
    </disease>
    <text>The disease is caused by variants affecting the gene represented in this entry.</text>
</comment>
<comment type="similarity">
    <text evidence="37">Belongs to the TBP family.</text>
</comment>
<organism>
    <name type="scientific">Homo sapiens</name>
    <name type="common">Human</name>
    <dbReference type="NCBI Taxonomy" id="9606"/>
    <lineage>
        <taxon>Eukaryota</taxon>
        <taxon>Metazoa</taxon>
        <taxon>Chordata</taxon>
        <taxon>Craniata</taxon>
        <taxon>Vertebrata</taxon>
        <taxon>Euteleostomi</taxon>
        <taxon>Mammalia</taxon>
        <taxon>Eutheria</taxon>
        <taxon>Euarchontoglires</taxon>
        <taxon>Primates</taxon>
        <taxon>Haplorrhini</taxon>
        <taxon>Catarrhini</taxon>
        <taxon>Hominidae</taxon>
        <taxon>Homo</taxon>
    </lineage>
</organism>